<keyword id="KW-0002">3D-structure</keyword>
<keyword id="KW-0025">Alternative splicing</keyword>
<keyword id="KW-0965">Cell junction</keyword>
<keyword id="KW-1003">Cell membrane</keyword>
<keyword id="KW-0966">Cell projection</keyword>
<keyword id="KW-0968">Cytoplasmic vesicle</keyword>
<keyword id="KW-0903">Direct protein sequencing</keyword>
<keyword id="KW-1015">Disulfide bond</keyword>
<keyword id="KW-0325">Glycoprotein</keyword>
<keyword id="KW-0393">Immunoglobulin domain</keyword>
<keyword id="KW-0472">Membrane</keyword>
<keyword id="KW-0597">Phosphoprotein</keyword>
<keyword id="KW-1267">Proteomics identification</keyword>
<keyword id="KW-0873">Pyrrolidone carboxylic acid</keyword>
<keyword id="KW-1185">Reference proteome</keyword>
<keyword id="KW-0677">Repeat</keyword>
<keyword id="KW-0964">Secreted</keyword>
<keyword id="KW-0732">Signal</keyword>
<keyword id="KW-0812">Transmembrane</keyword>
<keyword id="KW-1133">Transmembrane helix</keyword>
<dbReference type="EMBL" id="J03858">
    <property type="protein sequence ID" value="AAA51826.1"/>
    <property type="molecule type" value="mRNA"/>
</dbReference>
<dbReference type="EMBL" id="X14831">
    <property type="protein sequence ID" value="CAA32940.1"/>
    <property type="molecule type" value="mRNA"/>
</dbReference>
<dbReference type="EMBL" id="X16354">
    <property type="protein sequence ID" value="CAA34404.1"/>
    <property type="molecule type" value="mRNA"/>
</dbReference>
<dbReference type="EMBL" id="X16356">
    <property type="protein sequence ID" value="CAA34405.1"/>
    <property type="molecule type" value="mRNA"/>
</dbReference>
<dbReference type="EMBL" id="D90311">
    <property type="protein sequence ID" value="BAA14341.1"/>
    <property type="molecule type" value="mRNA"/>
</dbReference>
<dbReference type="EMBL" id="D90312">
    <property type="protein sequence ID" value="BAA14342.1"/>
    <property type="molecule type" value="mRNA"/>
</dbReference>
<dbReference type="EMBL" id="D90313">
    <property type="protein sequence ID" value="BAA14343.1"/>
    <property type="molecule type" value="mRNA"/>
</dbReference>
<dbReference type="EMBL" id="M69176">
    <property type="protein sequence ID" value="AAA51825.1"/>
    <property type="molecule type" value="mRNA"/>
</dbReference>
<dbReference type="EMBL" id="M72238">
    <property type="protein sequence ID" value="AAA58393.1"/>
    <property type="molecule type" value="mRNA"/>
</dbReference>
<dbReference type="EMBL" id="M72238">
    <property type="protein sequence ID" value="AAA58394.1"/>
    <property type="molecule type" value="mRNA"/>
</dbReference>
<dbReference type="EMBL" id="M76741">
    <property type="protein sequence ID" value="AAA57141.1"/>
    <property type="status" value="ALT_SEQ"/>
    <property type="molecule type" value="Genomic_DNA"/>
</dbReference>
<dbReference type="EMBL" id="M76742">
    <property type="protein sequence ID" value="AAA57142.1"/>
    <property type="molecule type" value="mRNA"/>
</dbReference>
<dbReference type="EMBL" id="M76743">
    <property type="protein sequence ID" value="AAA57143.1"/>
    <property type="molecule type" value="mRNA"/>
</dbReference>
<dbReference type="EMBL" id="M76744">
    <property type="protein sequence ID" value="AAA57144.1"/>
    <property type="molecule type" value="mRNA"/>
</dbReference>
<dbReference type="EMBL" id="S71326">
    <property type="protein sequence ID" value="AAB31183.1"/>
    <property type="molecule type" value="mRNA"/>
</dbReference>
<dbReference type="EMBL" id="D12502">
    <property type="protein sequence ID" value="BAA02063.1"/>
    <property type="molecule type" value="mRNA"/>
</dbReference>
<dbReference type="EMBL" id="AY766113">
    <property type="protein sequence ID" value="AAV34600.1"/>
    <property type="molecule type" value="mRNA"/>
</dbReference>
<dbReference type="EMBL" id="DQ989182">
    <property type="protein sequence ID" value="ABI75349.1"/>
    <property type="molecule type" value="Genomic_DNA"/>
</dbReference>
<dbReference type="EMBL" id="AC004785">
    <property type="protein sequence ID" value="AAC18433.1"/>
    <property type="molecule type" value="Genomic_DNA"/>
</dbReference>
<dbReference type="EMBL" id="AC004785">
    <property type="protein sequence ID" value="AAC18434.1"/>
    <property type="molecule type" value="Genomic_DNA"/>
</dbReference>
<dbReference type="EMBL" id="AC004785">
    <property type="protein sequence ID" value="AAC18435.1"/>
    <property type="molecule type" value="Genomic_DNA"/>
</dbReference>
<dbReference type="EMBL" id="AC004785">
    <property type="protein sequence ID" value="AAC18436.1"/>
    <property type="molecule type" value="Genomic_DNA"/>
</dbReference>
<dbReference type="EMBL" id="AC004785">
    <property type="protein sequence ID" value="AAC18437.1"/>
    <property type="molecule type" value="Genomic_DNA"/>
</dbReference>
<dbReference type="EMBL" id="AC004785">
    <property type="protein sequence ID" value="AAC18438.1"/>
    <property type="molecule type" value="Genomic_DNA"/>
</dbReference>
<dbReference type="EMBL" id="AC004785">
    <property type="protein sequence ID" value="AAC18439.1"/>
    <property type="molecule type" value="Genomic_DNA"/>
</dbReference>
<dbReference type="EMBL" id="CH471126">
    <property type="protein sequence ID" value="EAW57137.1"/>
    <property type="molecule type" value="Genomic_DNA"/>
</dbReference>
<dbReference type="EMBL" id="CH471126">
    <property type="protein sequence ID" value="EAW57140.1"/>
    <property type="molecule type" value="Genomic_DNA"/>
</dbReference>
<dbReference type="EMBL" id="CH471126">
    <property type="protein sequence ID" value="EAW57141.1"/>
    <property type="molecule type" value="Genomic_DNA"/>
</dbReference>
<dbReference type="EMBL" id="CH471126">
    <property type="protein sequence ID" value="EAW57143.1"/>
    <property type="molecule type" value="Genomic_DNA"/>
</dbReference>
<dbReference type="EMBL" id="BC014473">
    <property type="protein sequence ID" value="AAH14473.1"/>
    <property type="molecule type" value="mRNA"/>
</dbReference>
<dbReference type="EMBL" id="X67277">
    <property type="protein sequence ID" value="CAA47694.1"/>
    <property type="molecule type" value="Genomic_DNA"/>
</dbReference>
<dbReference type="CCDS" id="CCDS12609.1">
    <molecule id="P13688-1"/>
</dbReference>
<dbReference type="CCDS" id="CCDS46089.1">
    <molecule id="P13688-8"/>
</dbReference>
<dbReference type="CCDS" id="CCDS54272.1">
    <molecule id="P13688-11"/>
</dbReference>
<dbReference type="CCDS" id="CCDS54273.1">
    <molecule id="P13688-6"/>
</dbReference>
<dbReference type="CCDS" id="CCDS54274.1">
    <molecule id="P13688-5"/>
</dbReference>
<dbReference type="PIR" id="A32164">
    <property type="entry name" value="A32164"/>
</dbReference>
<dbReference type="PIR" id="B48078">
    <property type="entry name" value="B48078"/>
</dbReference>
<dbReference type="PIR" id="JH0394">
    <property type="entry name" value="JH0394"/>
</dbReference>
<dbReference type="PIR" id="JH0395">
    <property type="entry name" value="JH0395"/>
</dbReference>
<dbReference type="PIR" id="JH0396">
    <property type="entry name" value="JH0396"/>
</dbReference>
<dbReference type="RefSeq" id="NP_001020083.1">
    <molecule id="P13688-8"/>
    <property type="nucleotide sequence ID" value="NM_001024912.3"/>
</dbReference>
<dbReference type="RefSeq" id="NP_001171742.1">
    <molecule id="P13688-6"/>
    <property type="nucleotide sequence ID" value="NM_001184813.2"/>
</dbReference>
<dbReference type="RefSeq" id="NP_001171744.1">
    <molecule id="P13688-5"/>
    <property type="nucleotide sequence ID" value="NM_001184815.2"/>
</dbReference>
<dbReference type="RefSeq" id="NP_001171745.1">
    <molecule id="P13688-11"/>
    <property type="nucleotide sequence ID" value="NM_001184816.2"/>
</dbReference>
<dbReference type="RefSeq" id="NP_001192273.1">
    <molecule id="P13688-10"/>
    <property type="nucleotide sequence ID" value="NM_001205344.2"/>
</dbReference>
<dbReference type="RefSeq" id="NP_001703.2">
    <molecule id="P13688-1"/>
    <property type="nucleotide sequence ID" value="NM_001712.4"/>
</dbReference>
<dbReference type="RefSeq" id="XP_011525508.1">
    <molecule id="P13688-4"/>
    <property type="nucleotide sequence ID" value="XM_011527206.3"/>
</dbReference>
<dbReference type="RefSeq" id="XP_054177686.1">
    <molecule id="P13688-4"/>
    <property type="nucleotide sequence ID" value="XM_054321711.1"/>
</dbReference>
<dbReference type="PDB" id="2GK2">
    <property type="method" value="X-ray"/>
    <property type="resolution" value="2.20 A"/>
    <property type="chains" value="A/B=34-141"/>
</dbReference>
<dbReference type="PDB" id="4QXW">
    <property type="method" value="X-ray"/>
    <property type="resolution" value="2.04 A"/>
    <property type="chains" value="A/B=35-141"/>
</dbReference>
<dbReference type="PDB" id="4WHD">
    <property type="method" value="X-ray"/>
    <property type="resolution" value="2.50 A"/>
    <property type="chains" value="A/B=34-141"/>
</dbReference>
<dbReference type="PDB" id="5DZL">
    <property type="method" value="X-ray"/>
    <property type="resolution" value="3.40 A"/>
    <property type="chains" value="A/B/C/D=35-141"/>
</dbReference>
<dbReference type="PDB" id="6AW2">
    <property type="method" value="X-ray"/>
    <property type="resolution" value="2.68 A"/>
    <property type="chains" value="A=34-141"/>
</dbReference>
<dbReference type="PDB" id="6GBG">
    <property type="method" value="X-ray"/>
    <property type="resolution" value="2.80 A"/>
    <property type="chains" value="D=35-142"/>
</dbReference>
<dbReference type="PDB" id="6GBH">
    <property type="method" value="X-ray"/>
    <property type="resolution" value="2.59 A"/>
    <property type="chains" value="B/D=35-142"/>
</dbReference>
<dbReference type="PDB" id="6V3P">
    <property type="method" value="X-ray"/>
    <property type="resolution" value="3.25 A"/>
    <property type="chains" value="A/B=34-141"/>
</dbReference>
<dbReference type="PDB" id="6XNO">
    <property type="method" value="X-ray"/>
    <property type="resolution" value="1.90 A"/>
    <property type="chains" value="A/B=35-141"/>
</dbReference>
<dbReference type="PDB" id="6XNT">
    <property type="method" value="X-ray"/>
    <property type="resolution" value="3.10 A"/>
    <property type="chains" value="A/B=35-141"/>
</dbReference>
<dbReference type="PDB" id="6XNW">
    <property type="method" value="X-ray"/>
    <property type="resolution" value="1.90 A"/>
    <property type="chains" value="A/B/C/D=35-141"/>
</dbReference>
<dbReference type="PDB" id="6XO1">
    <property type="method" value="X-ray"/>
    <property type="resolution" value="1.76 A"/>
    <property type="chains" value="A/B=35-141"/>
</dbReference>
<dbReference type="PDB" id="7MU8">
    <property type="method" value="X-ray"/>
    <property type="resolution" value="1.70 A"/>
    <property type="chains" value="A/B=35-141"/>
</dbReference>
<dbReference type="PDB" id="7RPP">
    <property type="method" value="X-ray"/>
    <property type="resolution" value="2.20 A"/>
    <property type="chains" value="A/B/C=35-141"/>
</dbReference>
<dbReference type="PDB" id="8CXJ">
    <property type="method" value="X-ray"/>
    <property type="resolution" value="3.05 A"/>
    <property type="chains" value="A/C/E/G=34-141"/>
</dbReference>
<dbReference type="PDBsum" id="2GK2"/>
<dbReference type="PDBsum" id="4QXW"/>
<dbReference type="PDBsum" id="4WHD"/>
<dbReference type="PDBsum" id="5DZL"/>
<dbReference type="PDBsum" id="6AW2"/>
<dbReference type="PDBsum" id="6GBG"/>
<dbReference type="PDBsum" id="6GBH"/>
<dbReference type="PDBsum" id="6V3P"/>
<dbReference type="PDBsum" id="6XNO"/>
<dbReference type="PDBsum" id="6XNT"/>
<dbReference type="PDBsum" id="6XNW"/>
<dbReference type="PDBsum" id="6XO1"/>
<dbReference type="PDBsum" id="7MU8"/>
<dbReference type="PDBsum" id="7RPP"/>
<dbReference type="PDBsum" id="8CXJ"/>
<dbReference type="SMR" id="P13688"/>
<dbReference type="BioGRID" id="107103">
    <property type="interactions" value="13"/>
</dbReference>
<dbReference type="DIP" id="DIP-42683N"/>
<dbReference type="FunCoup" id="P13688">
    <property type="interactions" value="186"/>
</dbReference>
<dbReference type="IntAct" id="P13688">
    <property type="interactions" value="11"/>
</dbReference>
<dbReference type="MINT" id="P13688"/>
<dbReference type="STRING" id="9606.ENSP00000161559"/>
<dbReference type="DrugBank" id="DB00113">
    <property type="generic name" value="Technetium Tc-99m arcitumomab"/>
</dbReference>
<dbReference type="GlyConnect" id="1070">
    <property type="glycosylation" value="14 N-Linked glycans (5 sites)"/>
</dbReference>
<dbReference type="GlyCosmos" id="P13688">
    <property type="glycosylation" value="22 sites, 14 glycans"/>
</dbReference>
<dbReference type="GlyGen" id="P13688">
    <property type="glycosylation" value="25 sites, 46 N-linked glycans (7 sites), 1 O-linked glycan (1 site)"/>
</dbReference>
<dbReference type="iPTMnet" id="P13688"/>
<dbReference type="PhosphoSitePlus" id="P13688"/>
<dbReference type="BioMuta" id="CEACAM1"/>
<dbReference type="DMDM" id="399116"/>
<dbReference type="CPTAC" id="CPTAC-1179"/>
<dbReference type="jPOST" id="P13688"/>
<dbReference type="MassIVE" id="P13688"/>
<dbReference type="PaxDb" id="9606-ENSP00000161559"/>
<dbReference type="PeptideAtlas" id="P13688"/>
<dbReference type="ProteomicsDB" id="52961">
    <molecule id="P13688-1"/>
</dbReference>
<dbReference type="ProteomicsDB" id="52962">
    <molecule id="P13688-10"/>
</dbReference>
<dbReference type="ProteomicsDB" id="52963">
    <molecule id="P13688-11"/>
</dbReference>
<dbReference type="ProteomicsDB" id="52964">
    <molecule id="P13688-2"/>
</dbReference>
<dbReference type="ProteomicsDB" id="52965">
    <molecule id="P13688-3"/>
</dbReference>
<dbReference type="ProteomicsDB" id="52966">
    <molecule id="P13688-4"/>
</dbReference>
<dbReference type="ProteomicsDB" id="52967">
    <molecule id="P13688-5"/>
</dbReference>
<dbReference type="ProteomicsDB" id="52968">
    <molecule id="P13688-6"/>
</dbReference>
<dbReference type="ProteomicsDB" id="52969">
    <molecule id="P13688-7"/>
</dbReference>
<dbReference type="ProteomicsDB" id="52970">
    <molecule id="P13688-8"/>
</dbReference>
<dbReference type="ProteomicsDB" id="52971">
    <molecule id="P13688-9"/>
</dbReference>
<dbReference type="Pumba" id="P13688"/>
<dbReference type="TopDownProteomics" id="P13688-2">
    <molecule id="P13688-2"/>
</dbReference>
<dbReference type="Antibodypedia" id="3684">
    <property type="antibodies" value="1074 antibodies from 46 providers"/>
</dbReference>
<dbReference type="DNASU" id="634"/>
<dbReference type="Ensembl" id="ENST00000161559.11">
    <molecule id="P13688-1"/>
    <property type="protein sequence ID" value="ENSP00000161559.6"/>
    <property type="gene ID" value="ENSG00000079385.23"/>
</dbReference>
<dbReference type="Ensembl" id="ENST00000352591.9">
    <molecule id="P13688-6"/>
    <property type="protein sequence ID" value="ENSP00000244291.6"/>
    <property type="gene ID" value="ENSG00000079385.23"/>
</dbReference>
<dbReference type="Ensembl" id="ENST00000358394.7">
    <molecule id="P13688-5"/>
    <property type="protein sequence ID" value="ENSP00000351165.2"/>
    <property type="gene ID" value="ENSG00000079385.23"/>
</dbReference>
<dbReference type="Ensembl" id="ENST00000403444.7">
    <molecule id="P13688-8"/>
    <property type="protein sequence ID" value="ENSP00000384709.3"/>
    <property type="gene ID" value="ENSG00000079385.23"/>
</dbReference>
<dbReference type="Ensembl" id="ENST00000403461.5">
    <molecule id="P13688-11"/>
    <property type="protein sequence ID" value="ENSP00000384083.1"/>
    <property type="gene ID" value="ENSG00000079385.23"/>
</dbReference>
<dbReference type="Ensembl" id="ENST00000599389.1">
    <molecule id="P13688-9"/>
    <property type="protein sequence ID" value="ENSP00000471918.1"/>
    <property type="gene ID" value="ENSG00000079385.23"/>
</dbReference>
<dbReference type="GeneID" id="634"/>
<dbReference type="KEGG" id="hsa:634"/>
<dbReference type="MANE-Select" id="ENST00000161559.11">
    <property type="protein sequence ID" value="ENSP00000161559.6"/>
    <property type="RefSeq nucleotide sequence ID" value="NM_001712.5"/>
    <property type="RefSeq protein sequence ID" value="NP_001703.2"/>
</dbReference>
<dbReference type="UCSC" id="uc002otv.3">
    <molecule id="P13688-1"/>
    <property type="organism name" value="human"/>
</dbReference>
<dbReference type="AGR" id="HGNC:1814"/>
<dbReference type="CTD" id="634"/>
<dbReference type="DisGeNET" id="634"/>
<dbReference type="GeneCards" id="CEACAM1"/>
<dbReference type="HGNC" id="HGNC:1814">
    <property type="gene designation" value="CEACAM1"/>
</dbReference>
<dbReference type="HPA" id="ENSG00000079385">
    <property type="expression patterns" value="Tissue enhanced (intestine)"/>
</dbReference>
<dbReference type="MIM" id="109770">
    <property type="type" value="gene"/>
</dbReference>
<dbReference type="neXtProt" id="NX_P13688"/>
<dbReference type="OpenTargets" id="ENSG00000079385"/>
<dbReference type="PharmGKB" id="PA26358"/>
<dbReference type="VEuPathDB" id="HostDB:ENSG00000079385"/>
<dbReference type="eggNOG" id="ENOG502RXPD">
    <property type="taxonomic scope" value="Eukaryota"/>
</dbReference>
<dbReference type="GeneTree" id="ENSGT01100000263479"/>
<dbReference type="HOGENOM" id="CLU_024555_2_0_1"/>
<dbReference type="InParanoid" id="P13688"/>
<dbReference type="OMA" id="DITILWY"/>
<dbReference type="OrthoDB" id="6159398at2759"/>
<dbReference type="PAN-GO" id="P13688">
    <property type="GO annotations" value="5 GO annotations based on evolutionary models"/>
</dbReference>
<dbReference type="PhylomeDB" id="P13688"/>
<dbReference type="TreeFam" id="TF336859"/>
<dbReference type="PathwayCommons" id="P13688"/>
<dbReference type="Reactome" id="R-HSA-1566977">
    <property type="pathway name" value="Fibronectin matrix formation"/>
</dbReference>
<dbReference type="Reactome" id="R-HSA-202733">
    <property type="pathway name" value="Cell surface interactions at the vascular wall"/>
</dbReference>
<dbReference type="Reactome" id="R-HSA-6798695">
    <property type="pathway name" value="Neutrophil degranulation"/>
</dbReference>
<dbReference type="Reactome" id="R-HSA-9854909">
    <property type="pathway name" value="Regulation of MITF-M dependent genes involved in invasion"/>
</dbReference>
<dbReference type="SignaLink" id="P13688"/>
<dbReference type="SIGNOR" id="P13688"/>
<dbReference type="BioGRID-ORCS" id="634">
    <property type="hits" value="23 hits in 1169 CRISPR screens"/>
</dbReference>
<dbReference type="EvolutionaryTrace" id="P13688"/>
<dbReference type="GeneWiki" id="CEACAM1"/>
<dbReference type="GenomeRNAi" id="634"/>
<dbReference type="Pharos" id="P13688">
    <property type="development level" value="Tbio"/>
</dbReference>
<dbReference type="PRO" id="PR:P13688"/>
<dbReference type="Proteomes" id="UP000005640">
    <property type="component" value="Chromosome 19"/>
</dbReference>
<dbReference type="RNAct" id="P13688">
    <property type="molecule type" value="protein"/>
</dbReference>
<dbReference type="Bgee" id="ENSG00000079385">
    <property type="expression patterns" value="Expressed in ileal mucosa and 149 other cell types or tissues"/>
</dbReference>
<dbReference type="ExpressionAtlas" id="P13688">
    <property type="expression patterns" value="baseline and differential"/>
</dbReference>
<dbReference type="GO" id="GO:0005912">
    <property type="term" value="C:adherens junction"/>
    <property type="evidence" value="ECO:0000250"/>
    <property type="project" value="UniProtKB"/>
</dbReference>
<dbReference type="GO" id="GO:0016324">
    <property type="term" value="C:apical plasma membrane"/>
    <property type="evidence" value="ECO:0000314"/>
    <property type="project" value="UniProtKB"/>
</dbReference>
<dbReference type="GO" id="GO:0009925">
    <property type="term" value="C:basal plasma membrane"/>
    <property type="evidence" value="ECO:0000250"/>
    <property type="project" value="UniProtKB"/>
</dbReference>
<dbReference type="GO" id="GO:0030054">
    <property type="term" value="C:cell junction"/>
    <property type="evidence" value="ECO:0000314"/>
    <property type="project" value="UniProtKB"/>
</dbReference>
<dbReference type="GO" id="GO:0009986">
    <property type="term" value="C:cell surface"/>
    <property type="evidence" value="ECO:0000314"/>
    <property type="project" value="UniProtKB"/>
</dbReference>
<dbReference type="GO" id="GO:0005911">
    <property type="term" value="C:cell-cell junction"/>
    <property type="evidence" value="ECO:0000314"/>
    <property type="project" value="UniProtKB"/>
</dbReference>
<dbReference type="GO" id="GO:0070062">
    <property type="term" value="C:extracellular exosome"/>
    <property type="evidence" value="ECO:0007005"/>
    <property type="project" value="UniProtKB"/>
</dbReference>
<dbReference type="GO" id="GO:0016328">
    <property type="term" value="C:lateral plasma membrane"/>
    <property type="evidence" value="ECO:0000250"/>
    <property type="project" value="UniProtKB"/>
</dbReference>
<dbReference type="GO" id="GO:0016020">
    <property type="term" value="C:membrane"/>
    <property type="evidence" value="ECO:0000314"/>
    <property type="project" value="MGI"/>
</dbReference>
<dbReference type="GO" id="GO:0031528">
    <property type="term" value="C:microvillus membrane"/>
    <property type="evidence" value="ECO:0007669"/>
    <property type="project" value="UniProtKB-SubCell"/>
</dbReference>
<dbReference type="GO" id="GO:0005886">
    <property type="term" value="C:plasma membrane"/>
    <property type="evidence" value="ECO:0000314"/>
    <property type="project" value="UniProtKB"/>
</dbReference>
<dbReference type="GO" id="GO:0035579">
    <property type="term" value="C:specific granule membrane"/>
    <property type="evidence" value="ECO:0000304"/>
    <property type="project" value="Reactome"/>
</dbReference>
<dbReference type="GO" id="GO:0070821">
    <property type="term" value="C:tertiary granule membrane"/>
    <property type="evidence" value="ECO:0000304"/>
    <property type="project" value="Reactome"/>
</dbReference>
<dbReference type="GO" id="GO:0030658">
    <property type="term" value="C:transport vesicle membrane"/>
    <property type="evidence" value="ECO:0007669"/>
    <property type="project" value="UniProtKB-SubCell"/>
</dbReference>
<dbReference type="GO" id="GO:0003779">
    <property type="term" value="F:actin binding"/>
    <property type="evidence" value="ECO:0000353"/>
    <property type="project" value="UniProtKB"/>
</dbReference>
<dbReference type="GO" id="GO:0015125">
    <property type="term" value="F:bile acid transmembrane transporter activity"/>
    <property type="evidence" value="ECO:0000250"/>
    <property type="project" value="UniProtKB"/>
</dbReference>
<dbReference type="GO" id="GO:0005516">
    <property type="term" value="F:calmodulin binding"/>
    <property type="evidence" value="ECO:0000250"/>
    <property type="project" value="UniProtKB"/>
</dbReference>
<dbReference type="GO" id="GO:0031005">
    <property type="term" value="F:filamin binding"/>
    <property type="evidence" value="ECO:0000353"/>
    <property type="project" value="UniProtKB"/>
</dbReference>
<dbReference type="GO" id="GO:0042802">
    <property type="term" value="F:identical protein binding"/>
    <property type="evidence" value="ECO:0000314"/>
    <property type="project" value="UniProtKB"/>
</dbReference>
<dbReference type="GO" id="GO:0019900">
    <property type="term" value="F:kinase binding"/>
    <property type="evidence" value="ECO:0000353"/>
    <property type="project" value="UniProtKB"/>
</dbReference>
<dbReference type="GO" id="GO:0046983">
    <property type="term" value="F:protein dimerization activity"/>
    <property type="evidence" value="ECO:0000250"/>
    <property type="project" value="UniProtKB"/>
</dbReference>
<dbReference type="GO" id="GO:0042803">
    <property type="term" value="F:protein homodimerization activity"/>
    <property type="evidence" value="ECO:0000250"/>
    <property type="project" value="UniProtKB"/>
</dbReference>
<dbReference type="GO" id="GO:0019903">
    <property type="term" value="F:protein phosphatase binding"/>
    <property type="evidence" value="ECO:0000353"/>
    <property type="project" value="UniProtKB"/>
</dbReference>
<dbReference type="GO" id="GO:1990782">
    <property type="term" value="F:protein tyrosine kinase binding"/>
    <property type="evidence" value="ECO:0000353"/>
    <property type="project" value="UniProtKB"/>
</dbReference>
<dbReference type="GO" id="GO:0001525">
    <property type="term" value="P:angiogenesis"/>
    <property type="evidence" value="ECO:0000303"/>
    <property type="project" value="UniProtKB"/>
</dbReference>
<dbReference type="GO" id="GO:0015721">
    <property type="term" value="P:bile acid and bile salt transport"/>
    <property type="evidence" value="ECO:0000250"/>
    <property type="project" value="UniProtKB"/>
</dbReference>
<dbReference type="GO" id="GO:0001568">
    <property type="term" value="P:blood vessel development"/>
    <property type="evidence" value="ECO:0000250"/>
    <property type="project" value="UniProtKB"/>
</dbReference>
<dbReference type="GO" id="GO:0007155">
    <property type="term" value="P:cell adhesion"/>
    <property type="evidence" value="ECO:0000250"/>
    <property type="project" value="UniProtKB"/>
</dbReference>
<dbReference type="GO" id="GO:0016477">
    <property type="term" value="P:cell migration"/>
    <property type="evidence" value="ECO:0000303"/>
    <property type="project" value="UniProtKB"/>
</dbReference>
<dbReference type="GO" id="GO:0098742">
    <property type="term" value="P:cell-cell adhesion via plasma-membrane adhesion molecules"/>
    <property type="evidence" value="ECO:0000250"/>
    <property type="project" value="UniProtKB"/>
</dbReference>
<dbReference type="GO" id="GO:0032869">
    <property type="term" value="P:cellular response to insulin stimulus"/>
    <property type="evidence" value="ECO:0000250"/>
    <property type="project" value="UniProtKB"/>
</dbReference>
<dbReference type="GO" id="GO:0035726">
    <property type="term" value="P:common myeloid progenitor cell proliferation"/>
    <property type="evidence" value="ECO:0000250"/>
    <property type="project" value="UniProtKB"/>
</dbReference>
<dbReference type="GO" id="GO:0038158">
    <property type="term" value="P:granulocyte colony-stimulating factor signaling pathway"/>
    <property type="evidence" value="ECO:0000250"/>
    <property type="project" value="UniProtKB"/>
</dbReference>
<dbReference type="GO" id="GO:0007156">
    <property type="term" value="P:homophilic cell adhesion via plasma membrane adhesion molecules"/>
    <property type="evidence" value="ECO:0000250"/>
    <property type="project" value="UniProtKB"/>
</dbReference>
<dbReference type="GO" id="GO:1901143">
    <property type="term" value="P:insulin catabolic process"/>
    <property type="evidence" value="ECO:0000250"/>
    <property type="project" value="UniProtKB"/>
</dbReference>
<dbReference type="GO" id="GO:0038016">
    <property type="term" value="P:insulin receptor internalization"/>
    <property type="evidence" value="ECO:0000250"/>
    <property type="project" value="UniProtKB"/>
</dbReference>
<dbReference type="GO" id="GO:0007229">
    <property type="term" value="P:integrin-mediated signaling pathway"/>
    <property type="evidence" value="ECO:0000303"/>
    <property type="project" value="UniProtKB"/>
</dbReference>
<dbReference type="GO" id="GO:0043318">
    <property type="term" value="P:negative regulation of cytotoxic T cell degranulation"/>
    <property type="evidence" value="ECO:0000314"/>
    <property type="project" value="UniProtKB"/>
</dbReference>
<dbReference type="GO" id="GO:0045717">
    <property type="term" value="P:negative regulation of fatty acid biosynthetic process"/>
    <property type="evidence" value="ECO:0000250"/>
    <property type="project" value="UniProtKB"/>
</dbReference>
<dbReference type="GO" id="GO:0030853">
    <property type="term" value="P:negative regulation of granulocyte differentiation"/>
    <property type="evidence" value="ECO:0000250"/>
    <property type="project" value="UniProtKB"/>
</dbReference>
<dbReference type="GO" id="GO:2000346">
    <property type="term" value="P:negative regulation of hepatocyte proliferation"/>
    <property type="evidence" value="ECO:0000250"/>
    <property type="project" value="UniProtKB"/>
</dbReference>
<dbReference type="GO" id="GO:0032692">
    <property type="term" value="P:negative regulation of interleukin-1 production"/>
    <property type="evidence" value="ECO:0000250"/>
    <property type="project" value="UniProtKB"/>
</dbReference>
<dbReference type="GO" id="GO:0051055">
    <property type="term" value="P:negative regulation of lipid biosynthetic process"/>
    <property type="evidence" value="ECO:0000250"/>
    <property type="project" value="UniProtKB"/>
</dbReference>
<dbReference type="GO" id="GO:0002859">
    <property type="term" value="P:negative regulation of natural killer cell mediated cytotoxicity directed against tumor cell target"/>
    <property type="evidence" value="ECO:0000315"/>
    <property type="project" value="UniProtKB"/>
</dbReference>
<dbReference type="GO" id="GO:0090331">
    <property type="term" value="P:negative regulation of platelet aggregation"/>
    <property type="evidence" value="ECO:0000250"/>
    <property type="project" value="UniProtKB"/>
</dbReference>
<dbReference type="GO" id="GO:0006469">
    <property type="term" value="P:negative regulation of protein kinase activity"/>
    <property type="evidence" value="ECO:0000250"/>
    <property type="project" value="UniProtKB"/>
</dbReference>
<dbReference type="GO" id="GO:0001915">
    <property type="term" value="P:negative regulation of T cell mediated cytotoxicity"/>
    <property type="evidence" value="ECO:0000314"/>
    <property type="project" value="UniProtKB"/>
</dbReference>
<dbReference type="GO" id="GO:0050860">
    <property type="term" value="P:negative regulation of T cell receptor signaling pathway"/>
    <property type="evidence" value="ECO:0000314"/>
    <property type="project" value="UniProtKB"/>
</dbReference>
<dbReference type="GO" id="GO:0043116">
    <property type="term" value="P:negative regulation of vascular permeability"/>
    <property type="evidence" value="ECO:0000250"/>
    <property type="project" value="UniProtKB"/>
</dbReference>
<dbReference type="GO" id="GO:2001214">
    <property type="term" value="P:positive regulation of vasculogenesis"/>
    <property type="evidence" value="ECO:0000250"/>
    <property type="project" value="UniProtKB"/>
</dbReference>
<dbReference type="GO" id="GO:0060312">
    <property type="term" value="P:regulation of blood vessel remodeling"/>
    <property type="evidence" value="ECO:0000250"/>
    <property type="project" value="UniProtKB"/>
</dbReference>
<dbReference type="GO" id="GO:0001558">
    <property type="term" value="P:regulation of cell growth"/>
    <property type="evidence" value="ECO:0000250"/>
    <property type="project" value="UniProtKB"/>
</dbReference>
<dbReference type="GO" id="GO:0030334">
    <property type="term" value="P:regulation of cell migration"/>
    <property type="evidence" value="ECO:0000314"/>
    <property type="project" value="UniProtKB"/>
</dbReference>
<dbReference type="GO" id="GO:0045601">
    <property type="term" value="P:regulation of endothelial cell differentiation"/>
    <property type="evidence" value="ECO:0000250"/>
    <property type="project" value="UniProtKB"/>
</dbReference>
<dbReference type="GO" id="GO:0010594">
    <property type="term" value="P:regulation of endothelial cell migration"/>
    <property type="evidence" value="ECO:0000250"/>
    <property type="project" value="UniProtKB"/>
</dbReference>
<dbReference type="GO" id="GO:0042058">
    <property type="term" value="P:regulation of epidermal growth factor receptor signaling pathway"/>
    <property type="evidence" value="ECO:0000250"/>
    <property type="project" value="UniProtKB"/>
</dbReference>
<dbReference type="GO" id="GO:0070372">
    <property type="term" value="P:regulation of ERK1 and ERK2 cascade"/>
    <property type="evidence" value="ECO:0000250"/>
    <property type="project" value="UniProtKB"/>
</dbReference>
<dbReference type="GO" id="GO:1903385">
    <property type="term" value="P:regulation of homophilic cell adhesion"/>
    <property type="evidence" value="ECO:0000250"/>
    <property type="project" value="UniProtKB"/>
</dbReference>
<dbReference type="GO" id="GO:0002682">
    <property type="term" value="P:regulation of immune system process"/>
    <property type="evidence" value="ECO:0000318"/>
    <property type="project" value="GO_Central"/>
</dbReference>
<dbReference type="GO" id="GO:0051896">
    <property type="term" value="P:regulation of phosphatidylinositol 3-kinase/protein kinase B signal transduction"/>
    <property type="evidence" value="ECO:0000250"/>
    <property type="project" value="UniProtKB"/>
</dbReference>
<dbReference type="GO" id="GO:1903670">
    <property type="term" value="P:regulation of sprouting angiogenesis"/>
    <property type="evidence" value="ECO:0000250"/>
    <property type="project" value="UniProtKB"/>
</dbReference>
<dbReference type="GO" id="GO:0007165">
    <property type="term" value="P:signal transduction"/>
    <property type="evidence" value="ECO:0000318"/>
    <property type="project" value="GO_Central"/>
</dbReference>
<dbReference type="GO" id="GO:0044319">
    <property type="term" value="P:wound healing, spreading of cells"/>
    <property type="evidence" value="ECO:0000314"/>
    <property type="project" value="UniProtKB"/>
</dbReference>
<dbReference type="CDD" id="cd20948">
    <property type="entry name" value="IgC2_CEACAM5-like"/>
    <property type="match status" value="1"/>
</dbReference>
<dbReference type="CDD" id="cd05740">
    <property type="entry name" value="IgI_hCEACAM_2_4_6_like"/>
    <property type="match status" value="1"/>
</dbReference>
<dbReference type="CDD" id="cd05774">
    <property type="entry name" value="IgV_CEACAM_D1"/>
    <property type="match status" value="1"/>
</dbReference>
<dbReference type="FunFam" id="2.60.40.10:FF:000340">
    <property type="entry name" value="Carcinoembryonic antigen-related cell adhesion molecule 1"/>
    <property type="match status" value="1"/>
</dbReference>
<dbReference type="FunFam" id="2.60.40.10:FF:000517">
    <property type="entry name" value="Carcinoembryonic antigen-related cell adhesion molecule 1"/>
    <property type="match status" value="1"/>
</dbReference>
<dbReference type="FunFam" id="2.60.40.10:FF:000244">
    <property type="entry name" value="carcinoembryonic antigen-related cell adhesion molecule 16"/>
    <property type="match status" value="2"/>
</dbReference>
<dbReference type="Gene3D" id="2.60.40.10">
    <property type="entry name" value="Immunoglobulins"/>
    <property type="match status" value="4"/>
</dbReference>
<dbReference type="InterPro" id="IPR050831">
    <property type="entry name" value="CEA_cell_adhesion"/>
</dbReference>
<dbReference type="InterPro" id="IPR007110">
    <property type="entry name" value="Ig-like_dom"/>
</dbReference>
<dbReference type="InterPro" id="IPR036179">
    <property type="entry name" value="Ig-like_dom_sf"/>
</dbReference>
<dbReference type="InterPro" id="IPR013783">
    <property type="entry name" value="Ig-like_fold"/>
</dbReference>
<dbReference type="InterPro" id="IPR003599">
    <property type="entry name" value="Ig_sub"/>
</dbReference>
<dbReference type="InterPro" id="IPR003598">
    <property type="entry name" value="Ig_sub2"/>
</dbReference>
<dbReference type="InterPro" id="IPR013106">
    <property type="entry name" value="Ig_V-set"/>
</dbReference>
<dbReference type="InterPro" id="IPR013151">
    <property type="entry name" value="Immunoglobulin_dom"/>
</dbReference>
<dbReference type="PANTHER" id="PTHR44427:SF1">
    <property type="entry name" value="CARCINOEMBRYONIC ANTIGEN-RELATED CELL ADHESION MOLECULE 1"/>
    <property type="match status" value="1"/>
</dbReference>
<dbReference type="PANTHER" id="PTHR44427">
    <property type="entry name" value="CARCINOEMBRYONIC ANTIGEN-RELATED CELL ADHESION MOLECULE 19"/>
    <property type="match status" value="1"/>
</dbReference>
<dbReference type="Pfam" id="PF00047">
    <property type="entry name" value="ig"/>
    <property type="match status" value="1"/>
</dbReference>
<dbReference type="Pfam" id="PF13895">
    <property type="entry name" value="Ig_2"/>
    <property type="match status" value="1"/>
</dbReference>
<dbReference type="Pfam" id="PF13927">
    <property type="entry name" value="Ig_3"/>
    <property type="match status" value="1"/>
</dbReference>
<dbReference type="Pfam" id="PF07686">
    <property type="entry name" value="V-set"/>
    <property type="match status" value="1"/>
</dbReference>
<dbReference type="SMART" id="SM00409">
    <property type="entry name" value="IG"/>
    <property type="match status" value="4"/>
</dbReference>
<dbReference type="SMART" id="SM00408">
    <property type="entry name" value="IGc2"/>
    <property type="match status" value="3"/>
</dbReference>
<dbReference type="SUPFAM" id="SSF48726">
    <property type="entry name" value="Immunoglobulin"/>
    <property type="match status" value="4"/>
</dbReference>
<dbReference type="PROSITE" id="PS50835">
    <property type="entry name" value="IG_LIKE"/>
    <property type="match status" value="3"/>
</dbReference>
<protein>
    <recommendedName>
        <fullName evidence="35">Cell adhesion molecule CEACAM1</fullName>
    </recommendedName>
    <alternativeName>
        <fullName evidence="30">Biliary glycoprotein 1</fullName>
        <shortName evidence="30">BGP-1</shortName>
    </alternativeName>
    <alternativeName>
        <fullName evidence="34">Carcinoembryonic antigen-related cell adhesion molecule 1</fullName>
        <shortName evidence="36">CEA cell adhesion molecule 1</shortName>
    </alternativeName>
    <cdAntigenName>CD66a</cdAntigenName>
</protein>
<accession>P13688</accession>
<accession>A6NE38</accession>
<accession>A8MY49</accession>
<accession>O60430</accession>
<accession>Q069I7</accession>
<accession>Q13854</accession>
<accession>Q13857</accession>
<accession>Q13858</accession>
<accession>Q13859</accession>
<accession>Q13860</accession>
<accession>Q15600</accession>
<accession>Q15601</accession>
<accession>Q16170</accession>
<accession>Q5UB49</accession>
<accession>Q7KYP5</accession>
<accession>Q96CA7</accession>
<accession>Q9UQV9</accession>
<organism>
    <name type="scientific">Homo sapiens</name>
    <name type="common">Human</name>
    <dbReference type="NCBI Taxonomy" id="9606"/>
    <lineage>
        <taxon>Eukaryota</taxon>
        <taxon>Metazoa</taxon>
        <taxon>Chordata</taxon>
        <taxon>Craniata</taxon>
        <taxon>Vertebrata</taxon>
        <taxon>Euteleostomi</taxon>
        <taxon>Mammalia</taxon>
        <taxon>Eutheria</taxon>
        <taxon>Euarchontoglires</taxon>
        <taxon>Primates</taxon>
        <taxon>Haplorrhini</taxon>
        <taxon>Catarrhini</taxon>
        <taxon>Hominidae</taxon>
        <taxon>Homo</taxon>
    </lineage>
</organism>
<evidence type="ECO:0000250" key="1">
    <source>
        <dbReference type="UniProtKB" id="P16573"/>
    </source>
</evidence>
<evidence type="ECO:0000250" key="2">
    <source>
        <dbReference type="UniProtKB" id="P31809"/>
    </source>
</evidence>
<evidence type="ECO:0000250" key="3">
    <source>
        <dbReference type="UniProtKB" id="P31997"/>
    </source>
</evidence>
<evidence type="ECO:0000255" key="4"/>
<evidence type="ECO:0000255" key="5">
    <source>
        <dbReference type="PROSITE-ProRule" id="PRU00114"/>
    </source>
</evidence>
<evidence type="ECO:0000255" key="6">
    <source>
        <dbReference type="PROSITE-ProRule" id="PRU00498"/>
    </source>
</evidence>
<evidence type="ECO:0000256" key="7">
    <source>
        <dbReference type="SAM" id="MobiDB-lite"/>
    </source>
</evidence>
<evidence type="ECO:0000269" key="8">
    <source>
    </source>
</evidence>
<evidence type="ECO:0000269" key="9">
    <source>
    </source>
</evidence>
<evidence type="ECO:0000269" key="10">
    <source>
    </source>
</evidence>
<evidence type="ECO:0000269" key="11">
    <source>
    </source>
</evidence>
<evidence type="ECO:0000269" key="12">
    <source>
    </source>
</evidence>
<evidence type="ECO:0000269" key="13">
    <source>
    </source>
</evidence>
<evidence type="ECO:0000269" key="14">
    <source>
    </source>
</evidence>
<evidence type="ECO:0000269" key="15">
    <source>
    </source>
</evidence>
<evidence type="ECO:0000269" key="16">
    <source>
    </source>
</evidence>
<evidence type="ECO:0000269" key="17">
    <source>
    </source>
</evidence>
<evidence type="ECO:0000269" key="18">
    <source>
    </source>
</evidence>
<evidence type="ECO:0000269" key="19">
    <source>
    </source>
</evidence>
<evidence type="ECO:0000269" key="20">
    <source>
    </source>
</evidence>
<evidence type="ECO:0000269" key="21">
    <source>
    </source>
</evidence>
<evidence type="ECO:0000269" key="22">
    <source>
    </source>
</evidence>
<evidence type="ECO:0000269" key="23">
    <source>
    </source>
</evidence>
<evidence type="ECO:0000269" key="24">
    <source>
    </source>
</evidence>
<evidence type="ECO:0000269" key="25">
    <source ref="9"/>
</evidence>
<evidence type="ECO:0000303" key="26">
    <source>
    </source>
</evidence>
<evidence type="ECO:0000303" key="27">
    <source>
    </source>
</evidence>
<evidence type="ECO:0000303" key="28">
    <source>
    </source>
</evidence>
<evidence type="ECO:0000303" key="29">
    <source>
    </source>
</evidence>
<evidence type="ECO:0000303" key="30">
    <source>
    </source>
</evidence>
<evidence type="ECO:0000303" key="31">
    <source>
    </source>
</evidence>
<evidence type="ECO:0000303" key="32">
    <source>
    </source>
</evidence>
<evidence type="ECO:0000303" key="33">
    <source ref="5"/>
</evidence>
<evidence type="ECO:0000303" key="34">
    <source ref="8"/>
</evidence>
<evidence type="ECO:0000305" key="35"/>
<evidence type="ECO:0000312" key="36">
    <source>
        <dbReference type="HGNC" id="HGNC:1814"/>
    </source>
</evidence>
<evidence type="ECO:0007829" key="37">
    <source>
        <dbReference type="PDB" id="7MU8"/>
    </source>
</evidence>
<comment type="function">
    <molecule>Isoform 1</molecule>
    <text evidence="1 2 14 16 19 21">Cell adhesion protein that mediates homophilic cell adhesion in a calcium-independent manner (By similarity). Plays a role as coinhibitory receptor in immune response, insulin action and also functions as an activator during angiogenesis (PubMed:18424730, PubMed:23696226, PubMed:25363763). Its coinhibitory receptor function is phosphorylation- and PTPN6 -dependent, which in turn, suppress signal transduction of associated receptors by dephosphorylation of their downstream effectors. Plays a role in immune response, of T cells, natural killer (NK) and neutrophils (PubMed:18424730, PubMed:23696226). Upon TCR/CD3 complex stimulation, inhibits TCR-mediated cytotoxicity by blocking granule exocytosis by mediating homophilic binding to adjacent cells, allowing interaction with and phosphorylation by LCK and interaction with the TCR/CD3 complex which recruits PTPN6 resulting in dephosphorylation of CD247 and ZAP70 (PubMed:18424730). Also inhibits T cell proliferation and cytokine production through inhibition of JNK cascade and plays a crucial role in regulating autoimmunity and anti-tumor immunity by inhibiting T cell through its interaction with HAVCR2 (PubMed:25363763). Upon natural killer (NK) cells activation, inhibit KLRK1-mediated cytolysis of CEACAM1-bearing tumor cells by trans-homophilic interactions with CEACAM1 on the target cell and lead to cis-interaction between CEACAM1 and KLRK1, allowing PTPN6 recruitment and then VAV1 dephosphorylation (PubMed:23696226). Upon neutrophils activation negatively regulates IL1B production by recruiting PTPN6 to a SYK-TLR4-CEACAM1 complex, that dephosphorylates SYK, reducing the production of reactive oxygen species (ROS) and lysosome disruption, which in turn, reduces the activity of the inflammasome. Down-regulates neutrophil production by acting as a coinhibitory receptor for CSF3R by down-regulating the CSF3R-STAT3 pathway through recruitment of PTPN6 that dephosphorylates CSF3R (By similarity). Also regulates insulin action by promoting INS clearance and regulating lipogenesis in liver through regulating insulin signaling (By similarity). Upon INS stimulation, undergoes phosphorylation by INSR leading to INS clearance by increasing receptor-mediated insulin endocytosis. This inernalization promotes interaction with FASN leading to receptor-mediated insulin degradation and to reduction of FASN activity leading to negative regulation of fatty acid synthesis. INSR-mediated phosphorylation also provokes a down-regulation of cell proliferation through SHC1 interaction resulting in decrease coupling of SHC1 to the MAPK3/ERK1-MAPK1/ERK2 and phosphatidylinositol 3-kinase pathways (By similarity). Functions as activator in angiogenesis by promoting blood vessel remodeling through endothelial cell differentiation and migration and in arteriogenesis by increasing the number of collateral arteries and collateral vessel calibers after ischemia. Also regulates vascular permeability through the VEGFR2 signaling pathway resulting in control of nitric oxide production (By similarity). Down-regulates cell growth in response to EGF through its interaction with SHC1 that mediates interaction with EGFR resulting in decrease coupling of SHC1 to the MAPK3/ERK1-MAPK1/ERK2 pathway (By similarity). Negatively regulates platelet aggregation by decreasing platelet adhesion on type I collagen through the GPVI-FcRgamma complex (By similarity). Inhibits cell migration and cell scattering through interaction with FLNA; interferes with the interaction of FLNA with RALA (PubMed:16291724). Mediates bile acid transport activity in a phosphorylation dependent manner (By similarity). Negatively regulates osteoclastogenesis (By similarity).</text>
</comment>
<comment type="function">
    <molecule>Isoform 8</molecule>
    <text evidence="1 2">Cell adhesion protein that mediates homophilic cell adhesion in a calcium-independent manner (By similarity). Promotes populations of T cells regulating IgA production and secretion associated with control of the commensal microbiota and resistance to enteropathogens (By similarity).</text>
</comment>
<comment type="subunit">
    <text evidence="1 2 9 10 11 12 13 14 16 19 21 22 23">Monomer. Oligomer. Heterodimer. Homodimer (PubMed:26483485). Cis-dimer/oligomer (via Ig-like C2-type and/or via cytoplasmic domains); induced by trans-homophilic cell adhesion through an allosteric mechanism transmitted by the Ig-like V-type domain, and is regulated by intracellular calcium and calmodulin. Interacts (via cytoplasmic domain) with calmodulin in a calcium dependent manner; reduces homophilic cell adhesion through dissociation of dimer (By similarity). Isoform 1 interacts (via cytoplasmic domain) with PTPN11 (preferentially) and PTPN6; cis-homodimer form is preferred; this interaction is decreased by formation of Isoform 1 /Isoform 8 cis-heterodimers and is dependent on the monomer/dimer equilibrium; this interaction is phosphorylation-dependent (PubMed:23696226). Isoform 1 interacts with LYN (By similarity). Isoform 1 interacts (via cytoplasmic domain) with SRC (via SH2 domain); this interaction is regulated by trans-homophilic cell adhesion (PubMed:7478590). Isoform 1 interacts (via cytoplasmic domain) with LCK; mediates phosphorylation at Tyr-493 and Tyr-520 resulting in PTPN6 association. Isoform 1 interacts with PTPN6; this interaction is phosphorylation-dependent and causes a profound decrease in TCR stimulation-induced CD247 and ZAP70 phosphorylation. Isoform 1 interacts with TCR/CD3 complex through TCR beta chain and CD3E; colocalizes at the cell surface and upon stimulation of the TCR/CD3 complex recruits PTPN6 in the TCR/CD3 complex, resulting in dephosphorylation of CD247 and ZAP70 (PubMed:18424730). Isoform 1 interacts (via cytoplasmic domain) with SHC1 (via SH2 domain); SHC1 mediates interaction with INSR or EGFR in a Ser-508 phosphorylation-dependent manner (By similarity). Isoform 1 interacts with EGFR; the interaction is indirect (PubMed:15467833). Isoform 1 interacts with CSF3R; down-regulates the CSF3R-STAT3 pathway through recruitment of PTPN6 that dephosphorylates CSF3R (By similarity). Isoform 1 (phosphorylated form) interacts with TLR4 and SYK; recruits PTPN6 that dephosphorylates SYK, reducing the production of reactive oxygen species (ROS) and lysosome disruption, leading to a reduction of the inflammasome activity (By similarity). Isoform 1 interacts with FLNA; inhibits cell migration and cell scattering by interfering with the interaction of FLNA with RALA (PubMed:16291724). Isoform 1 interacts (via cytoplasmic domain) with PXN; the interaction is phosphotyrosyl-dependent (PubMed:11035932). Isoform 1 interacts with KLRK1; recruits PTPN6 that dephosphorylates VAV1 (PubMed:23696226). Isoform 1 interacts with CEACAM8 (PubMed:11994468). Isoform 1 interacts with FASN; this interaction is insulin and phosphorylation-dependent; reduces fatty-acid synthase activity (By similarity). Interacts (via Ig-like V-type) with HAVCR2 (via Ig-like V-type); facilitates the maturation and cell surface expression of HAVCR2 thereby regulating T cell tolerance induction (PubMed:25363763). Isoform 8 interacts (via the cytoplasmic domain) with ANXA2; this interaction is regulated by phosphorylation and appears in the AIIt complex (PubMed:14522961). Interacts (via Lewis X moieties) with CD209 (via C-type lectin domain); this interaction is regulated by the glycosylation pattern of CEACAM1 on cell types and regulates contact between dendritic cells and neutrophils (PubMed:16246332).</text>
</comment>
<comment type="interaction">
    <interactant intactId="EBI-4314481">
        <id>P13688</id>
    </interactant>
    <interactant intactId="EBI-4314526">
        <id>Q16568</id>
        <label>CARTPT</label>
    </interactant>
    <organismsDiffer>false</organismsDiffer>
    <experiments>3</experiments>
</comment>
<comment type="interaction">
    <interactant intactId="EBI-4314481">
        <id>P13688</id>
    </interactant>
    <interactant intactId="EBI-4314481">
        <id>P13688</id>
        <label>CEACAM1</label>
    </interactant>
    <organismsDiffer>false</organismsDiffer>
    <experiments>3</experiments>
</comment>
<comment type="interaction">
    <interactant intactId="EBI-4314481">
        <id>P13688</id>
    </interactant>
    <interactant intactId="EBI-4314501">
        <id>P40199</id>
        <label>CEACAM6</label>
    </interactant>
    <organismsDiffer>false</organismsDiffer>
    <experiments>2</experiments>
</comment>
<comment type="interaction">
    <interactant intactId="EBI-4314481">
        <id>P13688</id>
    </interactant>
    <interactant intactId="EBI-11472922">
        <id>Q8TDQ0</id>
        <label>HAVCR2</label>
    </interactant>
    <organismsDiffer>false</organismsDiffer>
    <experiments>4</experiments>
</comment>
<comment type="interaction">
    <interactant intactId="EBI-4314481">
        <id>P13688</id>
    </interactant>
    <interactant intactId="EBI-26495131">
        <id>Q04883</id>
        <label>opaD</label>
    </interactant>
    <organismsDiffer>true</organismsDiffer>
    <experiments>2</experiments>
</comment>
<comment type="interaction">
    <interactant intactId="EBI-4314481">
        <id>P13688</id>
    </interactant>
    <interactant intactId="EBI-26495102">
        <id>Q04884</id>
        <label>opaH</label>
    </interactant>
    <organismsDiffer>true</organismsDiffer>
    <experiments>3</experiments>
</comment>
<comment type="interaction">
    <interactant intactId="EBI-4314481">
        <id>P13688</id>
    </interactant>
    <interactant intactId="EBI-7936357">
        <id>Q8GH87</id>
        <label>uspa1</label>
    </interactant>
    <organismsDiffer>true</organismsDiffer>
    <experiments>12</experiments>
</comment>
<comment type="subcellular location">
    <molecule>Isoform 1</molecule>
    <subcellularLocation>
        <location evidence="1">Cell membrane</location>
        <topology evidence="1">Single-pass type I membrane protein</topology>
    </subcellularLocation>
    <subcellularLocation>
        <location evidence="1">Lateral cell membrane</location>
    </subcellularLocation>
    <subcellularLocation>
        <location evidence="1">Apical cell membrane</location>
    </subcellularLocation>
    <subcellularLocation>
        <location evidence="1">Basal cell membrane</location>
    </subcellularLocation>
    <subcellularLocation>
        <location evidence="14">Cell junction</location>
    </subcellularLocation>
    <subcellularLocation>
        <location evidence="1">Cell junction</location>
        <location evidence="1">Adherens junction</location>
    </subcellularLocation>
    <text evidence="1">Canalicular domain of hepatocyte plasma membranes. Found as a mixture of monomer, dimer and oligomer in the plasma membrane. Occurs predominantly as cis-dimers and/or small cis-oligomers in the cell junction regions. Found as dimer in the solution. Predominantly localized to the lateral cell membranes.</text>
</comment>
<comment type="subcellular location">
    <molecule>Isoform 2</molecule>
    <subcellularLocation>
        <location evidence="18">Secreted</location>
    </subcellularLocation>
</comment>
<comment type="subcellular location">
    <molecule>Isoform 3</molecule>
    <subcellularLocation>
        <location evidence="18">Secreted</location>
    </subcellularLocation>
</comment>
<comment type="subcellular location">
    <molecule>Isoform 4</molecule>
    <subcellularLocation>
        <location evidence="18">Secreted</location>
    </subcellularLocation>
</comment>
<comment type="subcellular location">
    <molecule>Isoform 5</molecule>
    <subcellularLocation>
        <location>Cell membrane</location>
        <topology>Single-pass type I membrane protein</topology>
    </subcellularLocation>
</comment>
<comment type="subcellular location">
    <molecule>Isoform 6</molecule>
    <subcellularLocation>
        <location>Cell membrane</location>
        <topology>Single-pass type I membrane protein</topology>
    </subcellularLocation>
</comment>
<comment type="subcellular location">
    <molecule>Isoform 7</molecule>
    <subcellularLocation>
        <location>Cell membrane</location>
        <topology>Single-pass type I membrane protein</topology>
    </subcellularLocation>
</comment>
<comment type="subcellular location">
    <molecule>Isoform 8</molecule>
    <subcellularLocation>
        <location evidence="11">Cell membrane</location>
        <topology evidence="1">Single-pass type I membrane protein</topology>
    </subcellularLocation>
    <subcellularLocation>
        <location evidence="11">Cytoplasmic vesicle</location>
        <location evidence="11">Secretory vesicle membrane</location>
    </subcellularLocation>
    <subcellularLocation>
        <location evidence="1">Lateral cell membrane</location>
    </subcellularLocation>
    <subcellularLocation>
        <location evidence="1">Apical cell membrane</location>
    </subcellularLocation>
    <subcellularLocation>
        <location evidence="1">Basal cell membrane</location>
    </subcellularLocation>
    <subcellularLocation>
        <location evidence="24">Cell junction</location>
    </subcellularLocation>
    <subcellularLocation>
        <location evidence="1">Cell junction</location>
        <location evidence="1">Adherens junction</location>
    </subcellularLocation>
    <text evidence="1 11">Predominantly localized to the lateral cell membranes. Found as a mixture of monomer, dimer and oligomer in the plasma membrane. Occurs predominantly as cis-dimers and/or small cis-oligomers in the cell junction regions (By similarity). Co-localizes with ANXA2 in secretory vesicles and with S100A10/p11 at the plasma membrane (PubMed:14522961).</text>
</comment>
<comment type="subcellular location">
    <subcellularLocation>
        <location evidence="2">Cell projection</location>
        <location evidence="2">Microvillus membrane</location>
        <topology evidence="35">Single-pass type I membrane protein</topology>
    </subcellularLocation>
    <subcellularLocation>
        <location evidence="8">Apical cell membrane</location>
        <topology evidence="35">Single-pass type I membrane protein</topology>
    </subcellularLocation>
    <text evidence="2 8">Localized to the apical glycocalyx surface (PubMed:10436421). Colocalizes with CEACAM20 at the apical brush border of intestinal cells.</text>
</comment>
<comment type="alternative products">
    <event type="alternative splicing"/>
    <isoform>
        <id>P13688-1</id>
        <name>1</name>
        <name>BGPa</name>
        <name evidence="26">CEACAM1-4L</name>
        <name>TM1-CEA</name>
        <sequence type="displayed"/>
    </isoform>
    <isoform>
        <id>P13688-2</id>
        <name>2</name>
        <name>BGPg</name>
        <name evidence="26">CEACAM1-4C1</name>
        <sequence type="described" ref="VSP_002482 VSP_002483"/>
    </isoform>
    <isoform>
        <id>P13688-3</id>
        <name>3</name>
        <name>BGPh</name>
        <name evidence="26">CEACAM1-3</name>
        <sequence type="described" ref="VSP_002478 VSP_002479"/>
    </isoform>
    <isoform>
        <id>P13688-4</id>
        <name>4</name>
        <name>BGPi</name>
        <name evidence="26">CEACAM1-3C2</name>
        <sequence type="described" ref="VSP_002480 VSP_002481"/>
    </isoform>
    <isoform>
        <id>P13688-5</id>
        <name>5</name>
        <name>BGPy</name>
        <name evidence="26">CEACAM1-3AL</name>
        <sequence type="described" ref="VSP_009227"/>
    </isoform>
    <isoform>
        <id>P13688-6</id>
        <name>6</name>
        <name>BGPb</name>
        <name evidence="26">CEACAM1-3L</name>
        <name>TM2-CEA</name>
        <sequence type="described" ref="VSP_010938"/>
    </isoform>
    <isoform>
        <id>P13688-7</id>
        <name>7</name>
        <name>BGPx</name>
        <name evidence="26">CEACAM1-1L</name>
        <sequence type="described" ref="VSP_012222"/>
    </isoform>
    <isoform>
        <id>P13688-8</id>
        <name>8</name>
        <name>BGPc</name>
        <name evidence="26">CEACAM1-4S</name>
        <name>TM3-CEA</name>
        <sequence type="described" ref="VSP_040572 VSP_040574"/>
    </isoform>
    <isoform>
        <id>P13688-9</id>
        <name>9</name>
        <name>BGPz</name>
        <name>CEACAM1-3AS</name>
        <sequence type="described" ref="VSP_040571 VSP_040572 VSP_040574"/>
    </isoform>
    <isoform>
        <id>P13688-10</id>
        <name>10</name>
        <sequence type="described" ref="VSP_040573 VSP_040575"/>
    </isoform>
    <isoform>
        <id>P13688-11</id>
        <name>11</name>
        <name>BGPd</name>
        <name>CEACAM1-3S</name>
        <sequence type="described" ref="VSP_010938 VSP_040572 VSP_040574"/>
    </isoform>
</comment>
<comment type="tissue specificity">
    <text evidence="8 10 16">Expressed in columnar epithelial cells of the colon (at protein level) (PubMed:10436421). The predominant forms expressed by T cells are those containing a long cytoplasmic domain (PubMed:18424730). Expressed in granulocytes and lymphocytes. Leukocytes only express isoforms 6 and isoform 1 (PubMed:11994468).</text>
</comment>
<comment type="induction">
    <text evidence="16">Induced in primary T cells by activation with IL-2.</text>
</comment>
<comment type="domain">
    <text evidence="1">Ig-like V-type domain mediates trans-homophilic cell adhesion through homodimerization and this active process is regulated by tyrosine kinase, PTPN11 and PTPN6. Ig-like C2-type and/or cytoplasmic domains mediate cis-dimer/oligomer.</text>
</comment>
<comment type="PTM">
    <molecule>Isoform 1</molecule>
    <text evidence="1 2 12 16 23">Phosphorylated on serine and tyrosine (By similarity). Isoform 1 is phosphorylated on tyrosine by Src family kinases like SRC and LCK and by receptor like CSF3R, EGFR and INSR upon stimulation (PubMed:15467833, PubMed:18424730, PubMed:7478590). Phosphorylated at Ser-508; mediates activity. Phosphorylated at Tyr-493; regulates activity (By similarity). Phosphorylated at Tyr-493 by EGFR and INSR upon stimulation; this phosphorylation is Ser-508-phosphorylation-dependent; mediates cellular internalization; increases interaction with downstream proteins like SHC1 and FASN (By similarity). Phosphorylated at Tyr-493 and Tyr-520 by LCK; mediates PTPN6 association and is regulated by homophilic ligation of CEACAM1 in the absence of T cell activation (PubMed:18424730). Phosphorylated at Tyr-520; mediates interaction with PTPN11 (By similarity).</text>
</comment>
<comment type="PTM">
    <molecule>Isoform 8</molecule>
    <text evidence="11">Phosphorylated on serine and threonine.</text>
</comment>
<comment type="miscellaneous">
    <molecule>Isoform 8</molecule>
    <text evidence="11">Pseudophosphorylated double mutant Thr-457-&gt;Asp and Ser-459-&gt;Asp. The single mutant Ser-459-&gt;Asp mutant highly binds with ANXA2.</text>
</comment>
<comment type="similarity">
    <text evidence="35">Belongs to the immunoglobulin superfamily. CEA family.</text>
</comment>
<comment type="sequence caution" evidence="35">
    <conflict type="erroneous gene model prediction">
        <sequence resource="EMBL-CDS" id="AAA57141"/>
    </conflict>
</comment>
<comment type="online information" name="Atlas of Genetics and Cytogenetics in Oncology and Haematology">
    <link uri="https://atlasgeneticsoncology.org/gene/40044/CEACAM1"/>
</comment>
<sequence>MGHLSAPLHRVRVPWQGLLLTASLLTFWNPPTTAQLTTESMPFNVAEGKEVLLLVHNLPQQLFGYSWYKGERVDGNRQIVGYAIGTQQATPGPANSGRETIYPNASLLIQNVTQNDTGFYTLQVIKSDLVNEEATGQFHVYPELPKPSISSNNSNPVEDKDAVAFTCEPETQDTTYLWWINNQSLPVSPRLQLSNGNRTLTLLSVTRNDTGPYECEIQNPVSANRSDPVTLNVTYGPDTPTISPSDTYYRPGANLSLSCYAASNPPAQYSWLINGTFQQSTQELFIPNITVNNSGSYTCHANNSVTGCNRTTVKTIIVTELSPVVAKPQIKASKTTVTGDKDSVNLTCSTNDTGISIRWFFKNQSLPSSERMKLSQGNTTLSINPVKREDAGTYWCEVFNPISKNQSDPIMLNVNYNALPQENGLSPGAIAGIVIGVVALVALIAVALACFLHFGKTGRASDQRDLTEHKPSVSNHTQDHSNDPPNKMNEVTYSTLNFEAQQPTQPTSASPSLTATEIIYSEVKKQ</sequence>
<name>CEAM1_HUMAN</name>
<feature type="signal peptide">
    <location>
        <begin position="1"/>
        <end position="34"/>
    </location>
</feature>
<feature type="chain" id="PRO_0000014562" description="Cell adhesion molecule CEACAM1">
    <location>
        <begin position="35"/>
        <end position="526"/>
    </location>
</feature>
<feature type="topological domain" description="Extracellular" evidence="4">
    <location>
        <begin position="35"/>
        <end position="428"/>
    </location>
</feature>
<feature type="transmembrane region" description="Helical" evidence="4">
    <location>
        <begin position="429"/>
        <end position="452"/>
    </location>
</feature>
<feature type="topological domain" description="Cytoplasmic" evidence="4">
    <location>
        <begin position="453"/>
        <end position="526"/>
    </location>
</feature>
<feature type="domain" description="Ig-like V-type" evidence="3">
    <location>
        <begin position="35"/>
        <end position="142"/>
    </location>
</feature>
<feature type="domain" description="Ig-like C2-type 1" evidence="5">
    <location>
        <begin position="145"/>
        <end position="232"/>
    </location>
</feature>
<feature type="domain" description="Ig-like C2-type 2" evidence="5">
    <location>
        <begin position="237"/>
        <end position="317"/>
    </location>
</feature>
<feature type="domain" description="Ig-like C2-type 3" evidence="5">
    <location>
        <begin position="323"/>
        <end position="413"/>
    </location>
</feature>
<feature type="region of interest" description="Required for homophilic binding" evidence="1">
    <location>
        <begin position="39"/>
        <end position="142"/>
    </location>
</feature>
<feature type="region of interest" description="Interaction with calmodulin" evidence="1">
    <location>
        <begin position="450"/>
        <end position="462"/>
    </location>
</feature>
<feature type="region of interest" description="Interaction with FLNA" evidence="1">
    <location>
        <begin position="452"/>
        <end position="526"/>
    </location>
</feature>
<feature type="region of interest" description="Disordered" evidence="7">
    <location>
        <begin position="461"/>
        <end position="513"/>
    </location>
</feature>
<feature type="region of interest" description="Required for interaction with PTPN11 and PTPN6 and for control of phosphorylation level" evidence="2">
    <location>
        <begin position="489"/>
        <end position="526"/>
    </location>
</feature>
<feature type="region of interest" description="Essential for interaction with PTPN11 and PTPN6" evidence="2">
    <location>
        <begin position="520"/>
        <end position="523"/>
    </location>
</feature>
<feature type="compositionally biased region" description="Basic and acidic residues" evidence="7">
    <location>
        <begin position="461"/>
        <end position="482"/>
    </location>
</feature>
<feature type="compositionally biased region" description="Polar residues" evidence="7">
    <location>
        <begin position="489"/>
        <end position="513"/>
    </location>
</feature>
<feature type="modified residue" description="Pyrrolidone carboxylic acid" evidence="20">
    <location>
        <position position="35"/>
    </location>
</feature>
<feature type="modified residue" description="Phosphotyrosine; by SRC, LCK, INSR and EGFR" evidence="16 23">
    <location>
        <position position="493"/>
    </location>
</feature>
<feature type="modified residue" description="Phosphoserine" evidence="1">
    <location>
        <position position="508"/>
    </location>
</feature>
<feature type="modified residue" description="Phosphotyrosine; by INSR, SRC and LCK" evidence="16 23">
    <location>
        <position position="520"/>
    </location>
</feature>
<feature type="glycosylation site" description="N-linked (GlcNAc...) asparagine" evidence="6 15">
    <location>
        <position position="104"/>
    </location>
</feature>
<feature type="glycosylation site" description="N-linked (GlcNAc...) asparagine" evidence="6 15">
    <location>
        <position position="111"/>
    </location>
</feature>
<feature type="glycosylation site" description="N-linked (GlcNAc...) asparagine" evidence="6">
    <location>
        <position position="115"/>
    </location>
</feature>
<feature type="glycosylation site" description="N-linked (GlcNAc...) asparagine" evidence="6 17">
    <location>
        <position position="152"/>
    </location>
</feature>
<feature type="glycosylation site" description="N-linked (GlcNAc...) asparagine" evidence="6">
    <location>
        <position position="182"/>
    </location>
</feature>
<feature type="glycosylation site" description="N-linked (GlcNAc...) asparagine" evidence="6">
    <location>
        <position position="197"/>
    </location>
</feature>
<feature type="glycosylation site" description="N-linked (GlcNAc...) asparagine" evidence="6 17">
    <location>
        <position position="208"/>
    </location>
</feature>
<feature type="glycosylation site" description="N-linked (GlcNAc...) asparagine" evidence="6 17">
    <location>
        <position position="224"/>
    </location>
</feature>
<feature type="glycosylation site" description="N-linked (GlcNAc...) asparagine" evidence="6">
    <location>
        <position position="232"/>
    </location>
</feature>
<feature type="glycosylation site" description="N-linked (GlcNAc...) asparagine" evidence="6">
    <location>
        <position position="254"/>
    </location>
</feature>
<feature type="glycosylation site" description="N-linked (GlcNAc...) asparagine" evidence="6">
    <location>
        <position position="274"/>
    </location>
</feature>
<feature type="glycosylation site" description="N-linked (GlcNAc...) asparagine" evidence="6">
    <location>
        <position position="288"/>
    </location>
</feature>
<feature type="glycosylation site" description="N-linked (GlcNAc...) asparagine" evidence="6">
    <location>
        <position position="292"/>
    </location>
</feature>
<feature type="glycosylation site" description="N-linked (GlcNAc...) asparagine" evidence="6">
    <location>
        <position position="302"/>
    </location>
</feature>
<feature type="glycosylation site" description="N-linked (GlcNAc...) asparagine" evidence="6">
    <location>
        <position position="309"/>
    </location>
</feature>
<feature type="glycosylation site" description="N-linked (GlcNAc...) asparagine" evidence="6">
    <location>
        <position position="345"/>
    </location>
</feature>
<feature type="glycosylation site" description="N-linked (GlcNAc...) asparagine" evidence="6">
    <location>
        <position position="351"/>
    </location>
</feature>
<feature type="glycosylation site" description="N-linked (GlcNAc...) asparagine" evidence="6 17">
    <location>
        <position position="363"/>
    </location>
</feature>
<feature type="glycosylation site" description="N-linked (GlcNAc...) asparagine" evidence="6 17">
    <location>
        <position position="378"/>
    </location>
</feature>
<feature type="glycosylation site" description="N-linked (GlcNAc...) asparagine" evidence="6 17">
    <location>
        <position position="405"/>
    </location>
</feature>
<feature type="disulfide bond" evidence="5">
    <location>
        <begin position="167"/>
        <end position="215"/>
    </location>
</feature>
<feature type="disulfide bond" evidence="5">
    <location>
        <begin position="259"/>
        <end position="299"/>
    </location>
</feature>
<feature type="disulfide bond" evidence="2 5">
    <location>
        <begin position="348"/>
        <end position="396"/>
    </location>
</feature>
<feature type="splice variant" id="VSP_012222" description="In isoform 7." evidence="32">
    <location>
        <begin position="143"/>
        <end position="416"/>
    </location>
</feature>
<feature type="splice variant" id="VSP_010938" description="In isoform 6 and isoform 11." evidence="29 34">
    <original>ELSPVVAKPQIKASKTTVTGDKDSVNLTCSTNDTGISIRWFFKNQSLPSSERMKLSQGNTTLSINPVKREDAGTYWCEVFNPISKNQSDPIMLNVNY</original>
    <variation>D</variation>
    <location>
        <begin position="320"/>
        <end position="416"/>
    </location>
</feature>
<feature type="splice variant" id="VSP_002478" description="In isoform 3." evidence="28">
    <original>EL</original>
    <variation>GK</variation>
    <location>
        <begin position="320"/>
        <end position="321"/>
    </location>
</feature>
<feature type="splice variant" id="VSP_009227" description="In isoform 5." evidence="32 33">
    <original>LSPVVAKPQIKASKTTVTGDKDSVNLTCSTNDTGISIRWFFKNQSLPSSERMKLSQGNTTLSINPVKREDAGTYWCEVFNPISKNQSDPIMLNVNY</original>
    <variation>RQNLTMLPRLDSNSWAQAILPSVSQSAEITD</variation>
    <location>
        <begin position="321"/>
        <end position="416"/>
    </location>
</feature>
<feature type="splice variant" id="VSP_040571" description="In isoform 9." evidence="32">
    <original>LSPVVAKPQIKASKTTVTGDKDSVNLTCSTNDTGISIRWFFKNQSLPSSERMKLSQGNTTLSINPVKREDAGTYWCEVFNPISKNQSDPIMLNVNY</original>
    <variation>MAFHHVAKAGLKLLSSSNPPASTSQSAKITD</variation>
    <location>
        <begin position="321"/>
        <end position="416"/>
    </location>
</feature>
<feature type="splice variant" id="VSP_002480" description="In isoform 4." evidence="28">
    <original>LSPVVAKPQIKASKTTVTGDKDSVNLTCSTN</original>
    <variation>SPVLGEDEAVPGQHHPQHKPCQEGGCWDVLV</variation>
    <location>
        <begin position="321"/>
        <end position="351"/>
    </location>
</feature>
<feature type="splice variant" id="VSP_002479" description="In isoform 3." evidence="28">
    <location>
        <begin position="322"/>
        <end position="526"/>
    </location>
</feature>
<feature type="splice variant" id="VSP_002481" description="In isoform 4." evidence="28">
    <location>
        <begin position="352"/>
        <end position="526"/>
    </location>
</feature>
<feature type="splice variant" id="VSP_002482" description="In isoform 2." evidence="28">
    <original>YN</original>
    <variation>CK</variation>
    <location>
        <begin position="416"/>
        <end position="417"/>
    </location>
</feature>
<feature type="splice variant" id="VSP_002483" description="In isoform 2." evidence="28">
    <location>
        <begin position="418"/>
        <end position="526"/>
    </location>
</feature>
<feature type="splice variant" id="VSP_040572" description="In isoform 8, isoform 9 and isoform 11." evidence="29 31 32 34">
    <original>RASDQR</original>
    <variation>SSGPLQ</variation>
    <location>
        <begin position="459"/>
        <end position="464"/>
    </location>
</feature>
<feature type="splice variant" id="VSP_040573" description="In isoform 10." evidence="27">
    <original>ASDQRDLTE</original>
    <variation>TTPMTHLTR</variation>
    <location>
        <begin position="460"/>
        <end position="468"/>
    </location>
</feature>
<feature type="splice variant" id="VSP_040574" description="In isoform 8, isoform 9 and isoform 11." evidence="29 31 32 34">
    <location>
        <begin position="465"/>
        <end position="526"/>
    </location>
</feature>
<feature type="splice variant" id="VSP_040575" description="In isoform 10." evidence="27">
    <location>
        <begin position="469"/>
        <end position="526"/>
    </location>
</feature>
<feature type="sequence variant" id="VAR_049844" description="In dbSNP:rs8111171." evidence="25">
    <original>Q</original>
    <variation>K</variation>
    <location>
        <position position="35"/>
    </location>
</feature>
<feature type="sequence variant" id="VAR_049845" description="In dbSNP:rs8110904." evidence="25">
    <original>A</original>
    <variation>V</variation>
    <location>
        <position position="83"/>
    </location>
</feature>
<feature type="sequence variant" id="VAR_049846" description="In dbSNP:rs8111468." evidence="25">
    <original>Q</original>
    <variation>H</variation>
    <location>
        <position position="123"/>
    </location>
</feature>
<feature type="sequence variant" id="VAR_049847" description="In dbSNP:rs41355544." evidence="25">
    <original>Q</original>
    <variation>R</variation>
    <location>
        <position position="376"/>
    </location>
</feature>
<feature type="mutagenesis site" description="Impairs interaction with HAVCR2." evidence="21">
    <original>N</original>
    <variation>A</variation>
    <location>
        <position position="76"/>
    </location>
</feature>
<feature type="mutagenesis site" description="Doesn't affect cell surface expression. Impairs phosphorylation." evidence="16">
    <original>RQ</original>
    <variation>GL</variation>
    <location>
        <begin position="77"/>
        <end position="78"/>
    </location>
</feature>
<feature type="mutagenesis site" description="Impairs interaction with HAVCR2." evidence="21">
    <original>G</original>
    <variation>A</variation>
    <location>
        <position position="81"/>
    </location>
</feature>
<feature type="mutagenesis site" description="Decreases the binding to ANXA2." evidence="11">
    <original>T</original>
    <variation>D</variation>
    <location>
        <position position="457"/>
    </location>
</feature>
<feature type="mutagenesis site" description="Impairs phosphorylation; when associated with F-520." evidence="16">
    <original>Y</original>
    <variation>F</variation>
    <location>
        <position position="493"/>
    </location>
</feature>
<feature type="mutagenesis site" description="Impairs phosphorylation; when associated with F-493." evidence="16">
    <original>Y</original>
    <variation>F</variation>
    <location>
        <position position="520"/>
    </location>
</feature>
<feature type="sequence conflict" description="In Ref. 6; AAA57142." evidence="35" ref="6">
    <original>P</original>
    <variation>H</variation>
    <location>
        <position position="142"/>
    </location>
</feature>
<feature type="sequence conflict" description="In Ref. 5; BAA02063." evidence="35" ref="5">
    <original>D</original>
    <variation>Y</variation>
    <location>
        <position position="246"/>
    </location>
</feature>
<feature type="strand" evidence="37">
    <location>
        <begin position="37"/>
        <end position="45"/>
    </location>
</feature>
<feature type="strand" evidence="37">
    <location>
        <begin position="51"/>
        <end position="57"/>
    </location>
</feature>
<feature type="strand" evidence="37">
    <location>
        <begin position="60"/>
        <end position="72"/>
    </location>
</feature>
<feature type="helix" evidence="37">
    <location>
        <begin position="75"/>
        <end position="77"/>
    </location>
</feature>
<feature type="strand" evidence="37">
    <location>
        <begin position="78"/>
        <end position="83"/>
    </location>
</feature>
<feature type="turn" evidence="37">
    <location>
        <begin position="84"/>
        <end position="87"/>
    </location>
</feature>
<feature type="strand" evidence="37">
    <location>
        <begin position="88"/>
        <end position="91"/>
    </location>
</feature>
<feature type="strand" evidence="37">
    <location>
        <begin position="99"/>
        <end position="101"/>
    </location>
</feature>
<feature type="strand" evidence="37">
    <location>
        <begin position="107"/>
        <end position="109"/>
    </location>
</feature>
<feature type="helix" evidence="37">
    <location>
        <begin position="114"/>
        <end position="116"/>
    </location>
</feature>
<feature type="strand" evidence="37">
    <location>
        <begin position="118"/>
        <end position="126"/>
    </location>
</feature>
<feature type="strand" evidence="37">
    <location>
        <begin position="132"/>
        <end position="140"/>
    </location>
</feature>
<feature type="sequence conflict" description="In Ref. 6; AAA57143." evidence="35" ref="6">
    <original>N</original>
    <variation>L</variation>
    <location sequence="P13688-5">
        <position position="323"/>
    </location>
</feature>
<feature type="sequence conflict" description="In Ref. 5; BAA02063." evidence="35" ref="5">
    <original>R</original>
    <variation>G</variation>
    <location sequence="P13688-5">
        <position position="329"/>
    </location>
</feature>
<feature type="sequence conflict" description="In Ref. 6; AAA57143." evidence="35" ref="6">
    <original>Q</original>
    <variation>E</variation>
    <location sequence="P13688-5">
        <position position="337"/>
    </location>
</feature>
<proteinExistence type="evidence at protein level"/>
<gene>
    <name evidence="36" type="primary">CEACAM1</name>
    <name evidence="33" type="synonym">BGP</name>
    <name type="synonym">BGP1</name>
</gene>
<reference key="1">
    <citation type="journal article" date="1989" name="J. Cell Biol.">
        <title>Carcinoembryonic antigens: alternative splicing accounts for the multiple mRNAs that code for novel members of the carcinoembryonic antigen family.</title>
        <authorList>
            <person name="Barnett T.R."/>
            <person name="Kretschmer A."/>
            <person name="Austen D.A."/>
            <person name="Goebel S.J."/>
            <person name="Hart J.T."/>
            <person name="Elting J.J."/>
            <person name="Kamarck M.E."/>
        </authorList>
    </citation>
    <scope>NUCLEOTIDE SEQUENCE [MRNA] (ISOFORMS 1; 6 AND 8)</scope>
</reference>
<reference key="2">
    <citation type="journal article" date="1988" name="Proc. Natl. Acad. Sci. U.S.A.">
        <title>Molecular cloning of a cDNA coding biliary glycoprotein I: primary structure of a glycoprotein immunologically crossreactive with carcinoembryonic antigen.</title>
        <authorList>
            <person name="Hinoda Y."/>
            <person name="Neumaier M."/>
            <person name="Hefta S.A."/>
            <person name="Drzeniek Z."/>
            <person name="Wagener C."/>
            <person name="Shively L."/>
            <person name="Hefta L.J.F."/>
            <person name="Shively J.E."/>
            <person name="Paxton R.J."/>
        </authorList>
    </citation>
    <scope>NUCLEOTIDE SEQUENCE [MRNA] (ISOFORM 1)</scope>
    <scope>PARTIAL PROTEIN SEQUENCE</scope>
    <scope>PYROGLUTAMATE FORMATION AT GLN-35</scope>
</reference>
<reference key="3">
    <citation type="journal article" date="1989" name="Proc. Natl. Acad. Sci. U.S.A.">
        <authorList>
            <person name="Hinoda Y."/>
            <person name="Neumaier M."/>
            <person name="Hefta S.A."/>
            <person name="Drzeniek Z."/>
            <person name="Wagener C."/>
            <person name="Shively L."/>
            <person name="Hefta L.J.F."/>
            <person name="Shively J.E."/>
            <person name="Paxton R.J."/>
        </authorList>
    </citation>
    <scope>ERRATUM OF PUBMED:2457922</scope>
    <scope>SEQUENCE REVISION</scope>
</reference>
<reference key="4">
    <citation type="journal article" date="1991" name="Biochem. Biophys. Res. Commun.">
        <title>Three novel molecular forms of biliary glycoprotein deduced from cDNA clones from a human leukocyte library.</title>
        <authorList>
            <person name="Kuroki M."/>
            <person name="Arakawa F."/>
            <person name="Matsuo Y."/>
            <person name="Oikawa S."/>
            <person name="Nakazato H."/>
            <person name="Matsuoka Y."/>
        </authorList>
    </citation>
    <scope>NUCLEOTIDE SEQUENCE [MRNA] (ISOFORMS 2; 3 AND 4)</scope>
    <scope>SUBCELLULAR LOCATION</scope>
    <scope>GLYCOSYLATION</scope>
    <source>
        <tissue>Leukocyte</tissue>
    </source>
</reference>
<reference key="5">
    <citation type="submission" date="1992-06" db="EMBL/GenBank/DDBJ databases">
        <title>A new isoform of human biliary glycoprotein (BGP) containing a domain encoded by an Alu-like sequence.</title>
        <authorList>
            <person name="Kuroki M."/>
            <person name="Matsuo Y."/>
            <person name="Misumi Y."/>
            <person name="Oikawa S."/>
            <person name="Matsuoka Y."/>
        </authorList>
    </citation>
    <scope>NUCLEOTIDE SEQUENCE [MRNA] (ISOFORM 5)</scope>
    <source>
        <tissue>Monocyte</tissue>
    </source>
</reference>
<reference key="6">
    <citation type="journal article" date="1993" name="Mol. Cell. Biol.">
        <title>Human biliary glycoprotein gene: characterization of a family of novel alternatively spliced RNAs and their expressed proteins.</title>
        <authorList>
            <person name="Barnett T.R."/>
            <person name="Drake L."/>
            <person name="Pickle W. II"/>
        </authorList>
    </citation>
    <scope>NUCLEOTIDE SEQUENCE [MRNA] (ISOFORM 7)</scope>
    <scope>NUCLEOTIDE SEQUENCE [MRNA] OF 293-494 (ISOFORM 5)</scope>
    <scope>NUCLEOTIDE SEQUENCE [MRNA] OF 293-458 (ISOFORM 9)</scope>
    <scope>NUCLEOTIDE SEQUENCE [GENOMIC DNA] OF 293-458</scope>
    <scope>GLYCOSYLATION</scope>
</reference>
<reference key="7">
    <citation type="journal article" date="1994" name="Blood">
        <title>CD66 identifies the biliary glycoprotein (BGP) adhesion molecule: cloning, expression, and adhesion functions of the BGPc splice variant.</title>
        <authorList>
            <person name="Watt S.M."/>
            <person name="Fawcett J."/>
            <person name="Murdoch S.J."/>
            <person name="Teixeira A.M."/>
            <person name="Gschmeissner S.E."/>
            <person name="Hajibagheri N.M."/>
            <person name="Simmons D.L."/>
        </authorList>
    </citation>
    <scope>NUCLEOTIDE SEQUENCE [MRNA] (ISOFORM 8)</scope>
    <scope>SUBCELLULAR LOCATION</scope>
    <source>
        <tissue>Colon adenocarcinoma</tissue>
    </source>
</reference>
<reference key="8">
    <citation type="submission" date="2004-09" db="EMBL/GenBank/DDBJ databases">
        <title>Isolation of the cDNA encoding a putative carcinoembryonic antigen-related cell adhesion molecule 1 short form 3 (CEACAM1-3S).</title>
        <authorList>
            <person name="Long S."/>
            <person name="Phillips A."/>
            <person name="Ma H."/>
            <person name="Paoni N.F."/>
            <person name="Wong-Staal F."/>
            <person name="Fan W."/>
        </authorList>
    </citation>
    <scope>NUCLEOTIDE SEQUENCE [MRNA] (ISOFORM 11)</scope>
</reference>
<reference key="9">
    <citation type="submission" date="2006-09" db="EMBL/GenBank/DDBJ databases">
        <authorList>
            <consortium name="SeattleSNPs variation discovery resource"/>
        </authorList>
    </citation>
    <scope>NUCLEOTIDE SEQUENCE [GENOMIC DNA]</scope>
    <scope>VARIANTS LYS-35; VAL-83; HIS-123 AND ARG-376</scope>
</reference>
<reference key="10">
    <citation type="journal article" date="2004" name="Nature">
        <title>The DNA sequence and biology of human chromosome 19.</title>
        <authorList>
            <person name="Grimwood J."/>
            <person name="Gordon L.A."/>
            <person name="Olsen A.S."/>
            <person name="Terry A."/>
            <person name="Schmutz J."/>
            <person name="Lamerdin J.E."/>
            <person name="Hellsten U."/>
            <person name="Goodstein D."/>
            <person name="Couronne O."/>
            <person name="Tran-Gyamfi M."/>
            <person name="Aerts A."/>
            <person name="Altherr M."/>
            <person name="Ashworth L."/>
            <person name="Bajorek E."/>
            <person name="Black S."/>
            <person name="Branscomb E."/>
            <person name="Caenepeel S."/>
            <person name="Carrano A.V."/>
            <person name="Caoile C."/>
            <person name="Chan Y.M."/>
            <person name="Christensen M."/>
            <person name="Cleland C.A."/>
            <person name="Copeland A."/>
            <person name="Dalin E."/>
            <person name="Dehal P."/>
            <person name="Denys M."/>
            <person name="Detter J.C."/>
            <person name="Escobar J."/>
            <person name="Flowers D."/>
            <person name="Fotopulos D."/>
            <person name="Garcia C."/>
            <person name="Georgescu A.M."/>
            <person name="Glavina T."/>
            <person name="Gomez M."/>
            <person name="Gonzales E."/>
            <person name="Groza M."/>
            <person name="Hammon N."/>
            <person name="Hawkins T."/>
            <person name="Haydu L."/>
            <person name="Ho I."/>
            <person name="Huang W."/>
            <person name="Israni S."/>
            <person name="Jett J."/>
            <person name="Kadner K."/>
            <person name="Kimball H."/>
            <person name="Kobayashi A."/>
            <person name="Larionov V."/>
            <person name="Leem S.-H."/>
            <person name="Lopez F."/>
            <person name="Lou Y."/>
            <person name="Lowry S."/>
            <person name="Malfatti S."/>
            <person name="Martinez D."/>
            <person name="McCready P.M."/>
            <person name="Medina C."/>
            <person name="Morgan J."/>
            <person name="Nelson K."/>
            <person name="Nolan M."/>
            <person name="Ovcharenko I."/>
            <person name="Pitluck S."/>
            <person name="Pollard M."/>
            <person name="Popkie A.P."/>
            <person name="Predki P."/>
            <person name="Quan G."/>
            <person name="Ramirez L."/>
            <person name="Rash S."/>
            <person name="Retterer J."/>
            <person name="Rodriguez A."/>
            <person name="Rogers S."/>
            <person name="Salamov A."/>
            <person name="Salazar A."/>
            <person name="She X."/>
            <person name="Smith D."/>
            <person name="Slezak T."/>
            <person name="Solovyev V."/>
            <person name="Thayer N."/>
            <person name="Tice H."/>
            <person name="Tsai M."/>
            <person name="Ustaszewska A."/>
            <person name="Vo N."/>
            <person name="Wagner M."/>
            <person name="Wheeler J."/>
            <person name="Wu K."/>
            <person name="Xie G."/>
            <person name="Yang J."/>
            <person name="Dubchak I."/>
            <person name="Furey T.S."/>
            <person name="DeJong P."/>
            <person name="Dickson M."/>
            <person name="Gordon D."/>
            <person name="Eichler E.E."/>
            <person name="Pennacchio L.A."/>
            <person name="Richardson P."/>
            <person name="Stubbs L."/>
            <person name="Rokhsar D.S."/>
            <person name="Myers R.M."/>
            <person name="Rubin E.M."/>
            <person name="Lucas S.M."/>
        </authorList>
    </citation>
    <scope>NUCLEOTIDE SEQUENCE [LARGE SCALE GENOMIC DNA]</scope>
</reference>
<reference key="11">
    <citation type="submission" date="2005-07" db="EMBL/GenBank/DDBJ databases">
        <authorList>
            <person name="Mural R.J."/>
            <person name="Istrail S."/>
            <person name="Sutton G.G."/>
            <person name="Florea L."/>
            <person name="Halpern A.L."/>
            <person name="Mobarry C.M."/>
            <person name="Lippert R."/>
            <person name="Walenz B."/>
            <person name="Shatkay H."/>
            <person name="Dew I."/>
            <person name="Miller J.R."/>
            <person name="Flanigan M.J."/>
            <person name="Edwards N.J."/>
            <person name="Bolanos R."/>
            <person name="Fasulo D."/>
            <person name="Halldorsson B.V."/>
            <person name="Hannenhalli S."/>
            <person name="Turner R."/>
            <person name="Yooseph S."/>
            <person name="Lu F."/>
            <person name="Nusskern D.R."/>
            <person name="Shue B.C."/>
            <person name="Zheng X.H."/>
            <person name="Zhong F."/>
            <person name="Delcher A.L."/>
            <person name="Huson D.H."/>
            <person name="Kravitz S.A."/>
            <person name="Mouchard L."/>
            <person name="Reinert K."/>
            <person name="Remington K.A."/>
            <person name="Clark A.G."/>
            <person name="Waterman M.S."/>
            <person name="Eichler E.E."/>
            <person name="Adams M.D."/>
            <person name="Hunkapiller M.W."/>
            <person name="Myers E.W."/>
            <person name="Venter J.C."/>
        </authorList>
    </citation>
    <scope>NUCLEOTIDE SEQUENCE [LARGE SCALE GENOMIC DNA]</scope>
</reference>
<reference key="12">
    <citation type="journal article" date="2004" name="Genome Res.">
        <title>The status, quality, and expansion of the NIH full-length cDNA project: the Mammalian Gene Collection (MGC).</title>
        <authorList>
            <consortium name="The MGC Project Team"/>
        </authorList>
    </citation>
    <scope>NUCLEOTIDE SEQUENCE [LARGE SCALE MRNA] (ISOFORM 10)</scope>
    <source>
        <tissue>Skin</tissue>
    </source>
</reference>
<reference key="13">
    <citation type="journal article" date="1994" name="Eur. J. Biochem.">
        <title>Transcriptional control of the human biliary glycoprotein gene, a CEA gene family member down-regulated in colorectal carcinomas.</title>
        <authorList>
            <person name="Hauck W."/>
            <person name="Nedellec P."/>
            <person name="Turbide C."/>
            <person name="Stanners C.P."/>
            <person name="Barnett T.R."/>
            <person name="Beauchemin N."/>
        </authorList>
    </citation>
    <scope>NUCLEOTIDE SEQUENCE [GENOMIC DNA] OF 1-21</scope>
    <scope>DISEASE</scope>
</reference>
<reference key="14">
    <citation type="journal article" date="1995" name="Eur. J. Biochem.">
        <title>Characterization and transcriptional activity of the mouse biliary glycoprotein 1 gene, a carcinoembryonic antigen-related gene.</title>
        <authorList>
            <person name="Nedellec P."/>
            <person name="Turbide C."/>
            <person name="Beauchemin N."/>
        </authorList>
    </citation>
    <scope>NUCLEOTIDE SEQUENCE [GENOMIC DNA] OF 1-21</scope>
</reference>
<reference key="15">
    <citation type="journal article" date="1995" name="Oncogene">
        <title>Association of pp60c-src with biliary glycoprotein (CD66a), an adhesion molecule of the carcinoembryonic antigen family downregulated in colorectal carcinomas.</title>
        <authorList>
            <person name="Bruemmer J."/>
            <person name="Neumaier M."/>
            <person name="Goepfert C."/>
            <person name="Wagener C."/>
        </authorList>
    </citation>
    <scope>INTERACTION WITH SRC</scope>
    <scope>PHOSPHORYLATION AT TYR-493 AND TYR-520 BY SRC</scope>
</reference>
<reference key="16">
    <citation type="journal article" date="1999" name="Exp. Cell Res.">
        <title>Redefined nomenclature for members of the carcinoembryonic antigen family.</title>
        <authorList>
            <person name="Beauchemin N."/>
            <person name="Draber P."/>
            <person name="Dveksler G."/>
            <person name="Gold P."/>
            <person name="Gray-Owen S."/>
            <person name="Grunert F."/>
            <person name="Hammarstrom S."/>
            <person name="Holmes K.V."/>
            <person name="Karlsson A."/>
            <person name="Kuroki M."/>
            <person name="Lin S.H."/>
            <person name="Lucka L."/>
            <person name="Najjar S.M."/>
            <person name="Neumaier M."/>
            <person name="Obrink B."/>
            <person name="Shively J.E."/>
            <person name="Skubitz K.M."/>
            <person name="Stanners C.P."/>
            <person name="Thomas P."/>
            <person name="Thompson J.A."/>
            <person name="Virji M."/>
            <person name="von Kleist S."/>
            <person name="Wagener C."/>
            <person name="Watt S."/>
            <person name="Zimmermann W."/>
        </authorList>
    </citation>
    <scope>NOMENCLATURE OF ALTERNATIVE SPLICING ISOFORMS</scope>
</reference>
<reference key="17">
    <citation type="journal article" date="1999" name="Tumor Biol.">
        <title>Four carcinoembryonic antigen subfamily members, CEA, NCA, BGP and CGM2, selectively expressed in the normal human colonic epithelium, are integral components of the fuzzy coat.</title>
        <authorList>
            <person name="Fraengsmyr L."/>
            <person name="Baranov V."/>
            <person name="Hammarstroem S."/>
        </authorList>
    </citation>
    <scope>SUBCELLULAR LOCATION</scope>
    <scope>TISSUE SPECIFICITY</scope>
</reference>
<reference key="18">
    <citation type="journal article" date="2000" name="Exp. Cell Res.">
        <title>Cell adhesion molecule CEACAM1 associates with paxillin in granulocytes and epithelial and endothelial cells.</title>
        <authorList>
            <person name="Ebrahimnejad A."/>
            <person name="Flayeh R."/>
            <person name="Unteregger G."/>
            <person name="Wagener C."/>
            <person name="Bruemmer J."/>
        </authorList>
    </citation>
    <scope>INTERACTION WITH PXN</scope>
</reference>
<reference key="19">
    <citation type="journal article" date="2002" name="J. Immunol.">
        <title>Carcinoembryonic antigen-related cell adhesion molecule 1 expression and signaling in human, mouse, and rat leukocytes: evidence for replacement of the short cytoplasmic domain isoform by glycosylphosphatidylinositol-linked proteins in human leukocytes.</title>
        <authorList>
            <person name="Singer B.B."/>
            <person name="Scheffrahn I."/>
            <person name="Heymann R."/>
            <person name="Sigmundsson K."/>
            <person name="Kammerer R."/>
            <person name="Obrink B."/>
        </authorList>
    </citation>
    <scope>TISSUE SPECIFICITY</scope>
    <scope>INTERACTION WITH CEACAM8</scope>
</reference>
<reference key="20">
    <citation type="journal article" date="2003" name="J. Biol. Chem.">
        <title>CEACAM1, a cell-cell adhesion molecule, directly associates with annexin II in a three-dimensional model of mammary morphogenesis.</title>
        <authorList>
            <person name="Kirshner J."/>
            <person name="Schumann D."/>
            <person name="Shively J.E."/>
        </authorList>
    </citation>
    <scope>INTERACTION WITH ANXA2</scope>
    <scope>SUBCELLULAR LOCATION</scope>
    <scope>MUTAGENESIS (ISOFORM 8)</scope>
    <scope>MUTAGENESIS OF THR-457</scope>
    <scope>COMPONENT OF AIIT COMPLEX</scope>
    <scope>PHOSPHORYLATION (ISOFORM 8)</scope>
</reference>
<reference key="21">
    <citation type="journal article" date="2004" name="J. Clin. Invest.">
        <title>CEACAM1 modulates epidermal growth factor receptor--mediated cell proliferation.</title>
        <authorList>
            <person name="Abou-Rjaily G.A."/>
            <person name="Lee S.J."/>
            <person name="May D."/>
            <person name="Al-Share Q.Y."/>
            <person name="Deangelis A.M."/>
            <person name="Ruch R.J."/>
            <person name="Neumaier M."/>
            <person name="Kalthoff H."/>
            <person name="Lin S.H."/>
            <person name="Najjar S.M."/>
        </authorList>
    </citation>
    <scope>PHOSPHORYLATION BY EGFR</scope>
    <scope>INTERACTION WITH EGFR</scope>
</reference>
<reference key="22">
    <citation type="journal article" date="2005" name="FEBS Lett.">
        <title>Interactions of DC-SIGN with Mac-1 and CEACAM1 regulate contact between dendritic cells and neutrophils.</title>
        <authorList>
            <person name="van Gisbergen K.P."/>
            <person name="Ludwig I.S."/>
            <person name="Geijtenbeek T.B."/>
            <person name="van Kooyk Y."/>
        </authorList>
    </citation>
    <scope>INTERACTION WITH CD209</scope>
</reference>
<reference key="23">
    <citation type="journal article" date="2005" name="J. Cell Sci.">
        <title>CEACAM1 functionally interacts with filamin A and exerts a dual role in the regulation of cell migration.</title>
        <authorList>
            <person name="Klaile E."/>
            <person name="Mueller M.M."/>
            <person name="Kannicht C."/>
            <person name="Singer B.B."/>
            <person name="Lucka L."/>
        </authorList>
    </citation>
    <scope>INTERACTION WITH FLNA</scope>
    <scope>SUBCELLULAR LOCATION</scope>
    <scope>FUNCTION</scope>
</reference>
<reference key="24">
    <citation type="journal article" date="2005" name="J. Proteome Res.">
        <title>Human plasma N-glycoproteome analysis by immunoaffinity subtraction, hydrazide chemistry, and mass spectrometry.</title>
        <authorList>
            <person name="Liu T."/>
            <person name="Qian W.-J."/>
            <person name="Gritsenko M.A."/>
            <person name="Camp D.G. II"/>
            <person name="Monroe M.E."/>
            <person name="Moore R.J."/>
            <person name="Smith R.D."/>
        </authorList>
    </citation>
    <scope>GLYCOSYLATION [LARGE SCALE ANALYSIS] AT ASN-104 AND ASN-111</scope>
    <source>
        <tissue>Plasma</tissue>
    </source>
</reference>
<reference key="25">
    <citation type="journal article" date="2008" name="J. Immunol.">
        <title>Carcinoembryonic antigen-related cell adhesion molecule 1 inhibits proximal TCR signaling by targeting ZAP-70.</title>
        <authorList>
            <person name="Chen Z."/>
            <person name="Chen L."/>
            <person name="Qiao S.W."/>
            <person name="Nagaishi T."/>
            <person name="Blumberg R.S."/>
        </authorList>
    </citation>
    <scope>FUNCTION</scope>
    <scope>INDUCTION</scope>
    <scope>TISSUE SPECIFICITY</scope>
    <scope>PHOSPHORYLATION AT TYR-493 AND TYR-520 BY LCK</scope>
    <scope>INTERACTION WITH LCK; PTPN6 AND TCR/CD3 COMPLEX</scope>
    <scope>MUTAGENESIS OF 77-ARG-GLN-78; TYR-493 AND TYR-520</scope>
</reference>
<reference key="26">
    <citation type="journal article" date="2009" name="J. Proteome Res.">
        <title>Glycoproteomics analysis of human liver tissue by combination of multiple enzyme digestion and hydrazide chemistry.</title>
        <authorList>
            <person name="Chen R."/>
            <person name="Jiang X."/>
            <person name="Sun D."/>
            <person name="Han G."/>
            <person name="Wang F."/>
            <person name="Ye M."/>
            <person name="Wang L."/>
            <person name="Zou H."/>
        </authorList>
    </citation>
    <scope>GLYCOSYLATION [LARGE SCALE ANALYSIS] AT ASN-152; ASN-208; ASN-224; ASN-363; ASN-378 AND ASN-405</scope>
    <source>
        <tissue>Liver</tissue>
    </source>
</reference>
<reference key="27">
    <citation type="journal article" date="2011" name="BMC Syst. Biol.">
        <title>Initial characterization of the human central proteome.</title>
        <authorList>
            <person name="Burkard T.R."/>
            <person name="Planyavsky M."/>
            <person name="Kaupe I."/>
            <person name="Breitwieser F.P."/>
            <person name="Buerckstuemmer T."/>
            <person name="Bennett K.L."/>
            <person name="Superti-Furga G."/>
            <person name="Colinge J."/>
        </authorList>
    </citation>
    <scope>IDENTIFICATION BY MASS SPECTROMETRY [LARGE SCALE ANALYSIS]</scope>
</reference>
<reference key="28">
    <citation type="journal article" date="2013" name="Eur. J. Immunol.">
        <title>CEACAM1 on activated NK cells inhibits NKG2D-mediated cytolytic function and signaling.</title>
        <authorList>
            <person name="Hosomi S."/>
            <person name="Chen Z."/>
            <person name="Baker K."/>
            <person name="Chen L."/>
            <person name="Huang Y.H."/>
            <person name="Olszak T."/>
            <person name="Zeissig S."/>
            <person name="Wang J.H."/>
            <person name="Mandelboim O."/>
            <person name="Beauchemin N."/>
            <person name="Lanier L.L."/>
            <person name="Blumberg R.S."/>
        </authorList>
    </citation>
    <scope>FUNCTION</scope>
    <scope>INTERACTION WITH KLRK1 AND PTPN6</scope>
</reference>
<reference key="29">
    <citation type="journal article" date="2014" name="J. Proteomics">
        <title>An enzyme assisted RP-RPLC approach for in-depth analysis of human liver phosphoproteome.</title>
        <authorList>
            <person name="Bian Y."/>
            <person name="Song C."/>
            <person name="Cheng K."/>
            <person name="Dong M."/>
            <person name="Wang F."/>
            <person name="Huang J."/>
            <person name="Sun D."/>
            <person name="Wang L."/>
            <person name="Ye M."/>
            <person name="Zou H."/>
        </authorList>
    </citation>
    <scope>IDENTIFICATION BY MASS SPECTROMETRY [LARGE SCALE ANALYSIS]</scope>
    <source>
        <tissue>Liver</tissue>
    </source>
</reference>
<reference key="30">
    <citation type="journal article" date="2015" name="Nature">
        <title>CEACAM1 regulates TIM-3-mediated tolerance and exhaustion.</title>
        <authorList>
            <person name="Huang Y.H."/>
            <person name="Zhu C."/>
            <person name="Kondo Y."/>
            <person name="Anderson A.C."/>
            <person name="Gandhi A."/>
            <person name="Russell A."/>
            <person name="Dougan S.K."/>
            <person name="Petersen B.S."/>
            <person name="Melum E."/>
            <person name="Pertel T."/>
            <person name="Clayton K.L."/>
            <person name="Raab M."/>
            <person name="Chen Q."/>
            <person name="Beauchemin N."/>
            <person name="Yazaki P.J."/>
            <person name="Pyzik M."/>
            <person name="Ostrowski M.A."/>
            <person name="Glickman J.N."/>
            <person name="Rudd C.E."/>
            <person name="Ploegh H.L."/>
            <person name="Franke A."/>
            <person name="Petsko G.A."/>
            <person name="Kuchroo V.K."/>
            <person name="Blumberg R.S."/>
        </authorList>
    </citation>
    <scope>INTERACTION WITH HAVCR2</scope>
    <scope>MUTAGENESIS OF ASN-76 AND GLY-81</scope>
    <scope>FUNCTION</scope>
</reference>
<reference key="31">
    <citation type="journal article" date="2015" name="Proc. Natl. Acad. Sci. U.S.A.">
        <title>Diverse oligomeric states of CEACAM IgV domains.</title>
        <authorList>
            <person name="Bonsor D.A."/>
            <person name="Gunther S."/>
            <person name="Beadenkopf R."/>
            <person name="Beckett D."/>
            <person name="Sundberg E.J."/>
        </authorList>
    </citation>
    <scope>SUBUNIT</scope>
</reference>
<reference key="32">
    <citation type="journal article" date="2006" name="Acta Crystallogr. D">
        <title>Structure of the N-terminal domain of human CEACAM1: binding target of the opacity proteins during invasion of Neisseria meningitidis and N. gonorrhoeae.</title>
        <authorList>
            <person name="Fedarovich A."/>
            <person name="Tomberg J."/>
            <person name="Nicholas R.A."/>
            <person name="Davies C."/>
        </authorList>
    </citation>
    <scope>X-RAY CRYSTALLOGRAPHY (2.2 ANGSTROMS) OF 34-141</scope>
</reference>